<dbReference type="EC" id="1.13.11.-" evidence="25"/>
<dbReference type="EC" id="1.13.11.34" evidence="18"/>
<dbReference type="EMBL" id="J03600">
    <property type="protein sequence ID" value="AAA36183.1"/>
    <property type="molecule type" value="mRNA"/>
</dbReference>
<dbReference type="EMBL" id="J03571">
    <property type="protein sequence ID" value="AAA65450.1"/>
    <property type="molecule type" value="mRNA"/>
</dbReference>
<dbReference type="EMBL" id="HM592258">
    <property type="protein sequence ID" value="ADR30798.1"/>
    <property type="molecule type" value="mRNA"/>
</dbReference>
<dbReference type="EMBL" id="HM592259">
    <property type="protein sequence ID" value="ADR30799.1"/>
    <property type="molecule type" value="mRNA"/>
</dbReference>
<dbReference type="EMBL" id="HM592260">
    <property type="protein sequence ID" value="ADR30800.1"/>
    <property type="molecule type" value="mRNA"/>
</dbReference>
<dbReference type="EMBL" id="HM592261">
    <property type="protein sequence ID" value="ADR30801.1"/>
    <property type="molecule type" value="mRNA"/>
</dbReference>
<dbReference type="EMBL" id="J04520">
    <property type="protein sequence ID" value="AAA59522.1"/>
    <property type="molecule type" value="Genomic_DNA"/>
</dbReference>
<dbReference type="EMBL" id="AL731567">
    <property type="status" value="NOT_ANNOTATED_CDS"/>
    <property type="molecule type" value="Genomic_DNA"/>
</dbReference>
<dbReference type="EMBL" id="BC130332">
    <property type="protein sequence ID" value="AAI30333.1"/>
    <property type="molecule type" value="mRNA"/>
</dbReference>
<dbReference type="EMBL" id="BC132677">
    <property type="protein sequence ID" value="AAI32678.1"/>
    <property type="molecule type" value="mRNA"/>
</dbReference>
<dbReference type="EMBL" id="BC143985">
    <property type="protein sequence ID" value="AAI43986.1"/>
    <property type="molecule type" value="mRNA"/>
</dbReference>
<dbReference type="EMBL" id="M38191">
    <property type="protein sequence ID" value="AAA63212.1"/>
    <property type="molecule type" value="Genomic_DNA"/>
</dbReference>
<dbReference type="CCDS" id="CCDS58078.1">
    <molecule id="P09917-2"/>
</dbReference>
<dbReference type="CCDS" id="CCDS7212.1">
    <molecule id="P09917-1"/>
</dbReference>
<dbReference type="PIR" id="A28117">
    <property type="entry name" value="DAHUAL"/>
</dbReference>
<dbReference type="RefSeq" id="NP_000689.1">
    <molecule id="P09917-1"/>
    <property type="nucleotide sequence ID" value="NM_000698.5"/>
</dbReference>
<dbReference type="RefSeq" id="NP_001243082.1">
    <molecule id="P09917-3"/>
    <property type="nucleotide sequence ID" value="NM_001256153.3"/>
</dbReference>
<dbReference type="RefSeq" id="NP_001243083.1">
    <molecule id="P09917-2"/>
    <property type="nucleotide sequence ID" value="NM_001256154.3"/>
</dbReference>
<dbReference type="RefSeq" id="NP_001307790.1">
    <property type="nucleotide sequence ID" value="NM_001320861.1"/>
</dbReference>
<dbReference type="PDB" id="3O8Y">
    <property type="method" value="X-ray"/>
    <property type="resolution" value="2.39 A"/>
    <property type="chains" value="A/B=1-674"/>
</dbReference>
<dbReference type="PDB" id="3V92">
    <property type="method" value="X-ray"/>
    <property type="resolution" value="2.74 A"/>
    <property type="chains" value="A/B=1-674"/>
</dbReference>
<dbReference type="PDB" id="3V98">
    <property type="method" value="X-ray"/>
    <property type="resolution" value="2.07 A"/>
    <property type="chains" value="A/B=1-674"/>
</dbReference>
<dbReference type="PDB" id="3V99">
    <property type="method" value="X-ray"/>
    <property type="resolution" value="2.25 A"/>
    <property type="chains" value="A/B=1-674"/>
</dbReference>
<dbReference type="PDB" id="6N2W">
    <property type="method" value="X-ray"/>
    <property type="resolution" value="2.71 A"/>
    <property type="chains" value="A/B=1-674"/>
</dbReference>
<dbReference type="PDB" id="6NCF">
    <property type="method" value="X-ray"/>
    <property type="resolution" value="2.87 A"/>
    <property type="chains" value="A/B/C/D=1-674"/>
</dbReference>
<dbReference type="PDB" id="7TTJ">
    <property type="method" value="X-ray"/>
    <property type="resolution" value="2.10 A"/>
    <property type="chains" value="A/B=1-674"/>
</dbReference>
<dbReference type="PDB" id="7TTK">
    <property type="method" value="X-ray"/>
    <property type="resolution" value="1.98 A"/>
    <property type="chains" value="A/B=1-674"/>
</dbReference>
<dbReference type="PDB" id="7TTL">
    <property type="method" value="X-ray"/>
    <property type="resolution" value="2.43 A"/>
    <property type="chains" value="A/B/C/D=1-674"/>
</dbReference>
<dbReference type="PDBsum" id="3O8Y"/>
<dbReference type="PDBsum" id="3V92"/>
<dbReference type="PDBsum" id="3V98"/>
<dbReference type="PDBsum" id="3V99"/>
<dbReference type="PDBsum" id="6N2W"/>
<dbReference type="PDBsum" id="6NCF"/>
<dbReference type="PDBsum" id="7TTJ"/>
<dbReference type="PDBsum" id="7TTK"/>
<dbReference type="PDBsum" id="7TTL"/>
<dbReference type="EMDB" id="EMD-40299"/>
<dbReference type="EMDB" id="EMD-40300"/>
<dbReference type="EMDB" id="EMD-40301"/>
<dbReference type="EMDB" id="EMD-40302"/>
<dbReference type="EMDB" id="EMD-40304"/>
<dbReference type="SMR" id="P09917"/>
<dbReference type="BioGRID" id="106741">
    <property type="interactions" value="105"/>
</dbReference>
<dbReference type="CORUM" id="P09917"/>
<dbReference type="DIP" id="DIP-30950N"/>
<dbReference type="FunCoup" id="P09917">
    <property type="interactions" value="408"/>
</dbReference>
<dbReference type="IntAct" id="P09917">
    <property type="interactions" value="67"/>
</dbReference>
<dbReference type="MINT" id="P09917"/>
<dbReference type="STRING" id="9606.ENSP00000363512"/>
<dbReference type="BindingDB" id="P09917"/>
<dbReference type="ChEMBL" id="CHEMBL215"/>
<dbReference type="DrugBank" id="DB01880">
    <property type="generic name" value="3,4-Dihydroxycinnamic Acid"/>
</dbReference>
<dbReference type="DrugBank" id="DB14001">
    <property type="generic name" value="alpha-Tocopherol succinate"/>
</dbReference>
<dbReference type="DrugBank" id="DB00233">
    <property type="generic name" value="Aminosalicylic acid"/>
</dbReference>
<dbReference type="DrugBank" id="DB12758">
    <property type="generic name" value="Atreleuton"/>
</dbReference>
<dbReference type="DrugBank" id="DB16101">
    <property type="generic name" value="Baicalein"/>
</dbReference>
<dbReference type="DrugBank" id="DB01014">
    <property type="generic name" value="Balsalazide"/>
</dbReference>
<dbReference type="DrugBank" id="DB09061">
    <property type="generic name" value="Cannabidiol"/>
</dbReference>
<dbReference type="DrugBank" id="DB14002">
    <property type="generic name" value="D-alpha-Tocopherol acetate"/>
</dbReference>
<dbReference type="DrugBank" id="DB11994">
    <property type="generic name" value="Diacerein"/>
</dbReference>
<dbReference type="DrugBank" id="DB00586">
    <property type="generic name" value="Diclofenac"/>
</dbReference>
<dbReference type="DrugBank" id="DB00711">
    <property type="generic name" value="Diethylcarbamazine"/>
</dbReference>
<dbReference type="DrugBank" id="DB18267">
    <property type="generic name" value="Ferroheme"/>
</dbReference>
<dbReference type="DrugBank" id="DB12010">
    <property type="generic name" value="Fostamatinib"/>
</dbReference>
<dbReference type="DrugBank" id="DB19283">
    <property type="generic name" value="Honokiol"/>
</dbReference>
<dbReference type="DrugBank" id="DB01892">
    <property type="generic name" value="Hyperforin"/>
</dbReference>
<dbReference type="DrugBank" id="DB08955">
    <property type="generic name" value="Ibuproxam"/>
</dbReference>
<dbReference type="DrugBank" id="DB00159">
    <property type="generic name" value="Icosapent"/>
</dbReference>
<dbReference type="DrugBank" id="DB01852">
    <property type="generic name" value="Kaempherol"/>
</dbReference>
<dbReference type="DrugBank" id="DB04725">
    <property type="generic name" value="Licofelone"/>
</dbReference>
<dbReference type="DrugBank" id="DB00179">
    <property type="generic name" value="Masoprocol"/>
</dbReference>
<dbReference type="DrugBank" id="DB00939">
    <property type="generic name" value="Meclofenamic acid"/>
</dbReference>
<dbReference type="DrugBank" id="DB14009">
    <property type="generic name" value="Medical Cannabis"/>
</dbReference>
<dbReference type="DrugBank" id="DB00244">
    <property type="generic name" value="Mesalazine"/>
</dbReference>
<dbReference type="DrugBank" id="DB01017">
    <property type="generic name" value="Minocycline"/>
</dbReference>
<dbReference type="DrugBank" id="DB16739">
    <property type="generic name" value="MK-886"/>
</dbReference>
<dbReference type="DrugBank" id="DB05431">
    <property type="generic name" value="MLN-977"/>
</dbReference>
<dbReference type="DrugBank" id="DB00471">
    <property type="generic name" value="Montelukast"/>
</dbReference>
<dbReference type="DrugBank" id="DB09285">
    <property type="generic name" value="Morniflumate"/>
</dbReference>
<dbReference type="DrugBank" id="DB14011">
    <property type="generic name" value="Nabiximols"/>
</dbReference>
<dbReference type="DrugBank" id="DB11133">
    <property type="generic name" value="Omega-3 fatty acids"/>
</dbReference>
<dbReference type="DrugBank" id="DB13168">
    <property type="generic name" value="Omega-6 fatty acids"/>
</dbReference>
<dbReference type="DrugBank" id="DB17040">
    <property type="generic name" value="PD-169316"/>
</dbReference>
<dbReference type="DrugBank" id="DB11645">
    <property type="generic name" value="PF-4191834"/>
</dbReference>
<dbReference type="DrugBank" id="DB02709">
    <property type="generic name" value="Resveratrol"/>
</dbReference>
<dbReference type="DrugBank" id="DB13174">
    <property type="generic name" value="Rhein"/>
</dbReference>
<dbReference type="DrugBank" id="DB00795">
    <property type="generic name" value="Sulfasalazine"/>
</dbReference>
<dbReference type="DrugBank" id="DB13481">
    <property type="generic name" value="Tenidap"/>
</dbReference>
<dbReference type="DrugBank" id="DB11466">
    <property type="generic name" value="Tepoxalin"/>
</dbReference>
<dbReference type="DrugBank" id="DB12435">
    <property type="generic name" value="Tipelukast"/>
</dbReference>
<dbReference type="DrugBank" id="DB00163">
    <property type="generic name" value="Vitamin E"/>
</dbReference>
<dbReference type="DrugBank" id="DB00744">
    <property type="generic name" value="Zileuton"/>
</dbReference>
<dbReference type="DrugCentral" id="P09917"/>
<dbReference type="GuidetoPHARMACOLOGY" id="1385"/>
<dbReference type="SwissLipids" id="SLP:000000669"/>
<dbReference type="iPTMnet" id="P09917"/>
<dbReference type="PhosphoSitePlus" id="P09917"/>
<dbReference type="BioMuta" id="ALOX5"/>
<dbReference type="DMDM" id="126407"/>
<dbReference type="jPOST" id="P09917"/>
<dbReference type="MassIVE" id="P09917"/>
<dbReference type="PaxDb" id="9606-ENSP00000363512"/>
<dbReference type="PeptideAtlas" id="P09917"/>
<dbReference type="ProteomicsDB" id="52278">
    <molecule id="P09917-1"/>
</dbReference>
<dbReference type="ProteomicsDB" id="7233"/>
<dbReference type="Pumba" id="P09917"/>
<dbReference type="Antibodypedia" id="3906">
    <property type="antibodies" value="794 antibodies from 44 providers"/>
</dbReference>
<dbReference type="DNASU" id="240"/>
<dbReference type="Ensembl" id="ENST00000374391.7">
    <molecule id="P09917-1"/>
    <property type="protein sequence ID" value="ENSP00000363512.2"/>
    <property type="gene ID" value="ENSG00000012779.12"/>
</dbReference>
<dbReference type="Ensembl" id="ENST00000542434.5">
    <molecule id="P09917-2"/>
    <property type="protein sequence ID" value="ENSP00000437634.1"/>
    <property type="gene ID" value="ENSG00000012779.12"/>
</dbReference>
<dbReference type="Ensembl" id="ENST00000610656.4">
    <molecule id="P09917-1"/>
    <property type="protein sequence ID" value="ENSP00000484468.1"/>
    <property type="gene ID" value="ENSG00000275565.4"/>
</dbReference>
<dbReference type="Ensembl" id="ENST00000622021.4">
    <molecule id="P09917-2"/>
    <property type="protein sequence ID" value="ENSP00000479958.1"/>
    <property type="gene ID" value="ENSG00000275565.4"/>
</dbReference>
<dbReference type="GeneID" id="240"/>
<dbReference type="KEGG" id="hsa:240"/>
<dbReference type="MANE-Select" id="ENST00000374391.7">
    <property type="protein sequence ID" value="ENSP00000363512.2"/>
    <property type="RefSeq nucleotide sequence ID" value="NM_000698.5"/>
    <property type="RefSeq protein sequence ID" value="NP_000689.1"/>
</dbReference>
<dbReference type="UCSC" id="uc001jce.5">
    <molecule id="P09917-1"/>
    <property type="organism name" value="human"/>
</dbReference>
<dbReference type="AGR" id="HGNC:435"/>
<dbReference type="CTD" id="240"/>
<dbReference type="DisGeNET" id="240"/>
<dbReference type="GeneCards" id="ALOX5"/>
<dbReference type="HGNC" id="HGNC:435">
    <property type="gene designation" value="ALOX5"/>
</dbReference>
<dbReference type="HPA" id="ENSG00000012779">
    <property type="expression patterns" value="Tissue enhanced (lung, lymphoid tissue)"/>
</dbReference>
<dbReference type="MalaCards" id="ALOX5"/>
<dbReference type="MIM" id="152390">
    <property type="type" value="gene"/>
</dbReference>
<dbReference type="neXtProt" id="NX_P09917"/>
<dbReference type="OpenTargets" id="ENSG00000012779"/>
<dbReference type="PharmGKB" id="PA46"/>
<dbReference type="VEuPathDB" id="HostDB:ENSG00000012779"/>
<dbReference type="eggNOG" id="ENOG502QQSP">
    <property type="taxonomic scope" value="Eukaryota"/>
</dbReference>
<dbReference type="GeneTree" id="ENSGT00940000156111"/>
<dbReference type="HOGENOM" id="CLU_004282_3_3_1"/>
<dbReference type="InParanoid" id="P09917"/>
<dbReference type="OMA" id="MMFNAND"/>
<dbReference type="OrthoDB" id="407298at2759"/>
<dbReference type="PAN-GO" id="P09917">
    <property type="GO annotations" value="7 GO annotations based on evolutionary models"/>
</dbReference>
<dbReference type="PhylomeDB" id="P09917"/>
<dbReference type="TreeFam" id="TF105320"/>
<dbReference type="BioCyc" id="MetaCyc:HS00336-MONOMER"/>
<dbReference type="BRENDA" id="1.13.11.34">
    <property type="organism ID" value="2681"/>
</dbReference>
<dbReference type="PathwayCommons" id="P09917"/>
<dbReference type="Reactome" id="R-HSA-2142688">
    <property type="pathway name" value="Synthesis of 5-eicosatetraenoic acids"/>
</dbReference>
<dbReference type="Reactome" id="R-HSA-2142691">
    <property type="pathway name" value="Synthesis of Leukotrienes (LT) and Eoxins (EX)"/>
</dbReference>
<dbReference type="Reactome" id="R-HSA-2142700">
    <property type="pathway name" value="Biosynthesis of Lipoxins (LX)"/>
</dbReference>
<dbReference type="Reactome" id="R-HSA-6785807">
    <property type="pathway name" value="Interleukin-4 and Interleukin-13 signaling"/>
</dbReference>
<dbReference type="Reactome" id="R-HSA-6798695">
    <property type="pathway name" value="Neutrophil degranulation"/>
</dbReference>
<dbReference type="Reactome" id="R-HSA-9012546">
    <property type="pathway name" value="Interleukin-18 signaling"/>
</dbReference>
<dbReference type="Reactome" id="R-HSA-9018676">
    <property type="pathway name" value="Biosynthesis of D-series resolvins"/>
</dbReference>
<dbReference type="Reactome" id="R-HSA-9018682">
    <property type="pathway name" value="Biosynthesis of maresins"/>
</dbReference>
<dbReference type="Reactome" id="R-HSA-9018896">
    <property type="pathway name" value="Biosynthesis of E-series 18(S)-resolvins"/>
</dbReference>
<dbReference type="Reactome" id="R-HSA-9020265">
    <property type="pathway name" value="Biosynthesis of aspirin-triggered D-series resolvins"/>
</dbReference>
<dbReference type="Reactome" id="R-HSA-9023661">
    <property type="pathway name" value="Biosynthesis of E-series 18(R)-resolvins"/>
</dbReference>
<dbReference type="Reactome" id="R-HSA-9026286">
    <property type="pathway name" value="Biosynthesis of DPAn-3-derived protectins and resolvins"/>
</dbReference>
<dbReference type="Reactome" id="R-HSA-9026290">
    <property type="pathway name" value="Biosynthesis of DPAn-3-derived maresins"/>
</dbReference>
<dbReference type="Reactome" id="R-HSA-9026403">
    <property type="pathway name" value="Biosynthesis of DPAn-3-derived 13-series resolvins"/>
</dbReference>
<dbReference type="Reactome" id="R-HSA-9027604">
    <property type="pathway name" value="Biosynthesis of electrophilic Omega-3 PUFA oxo-derivatives"/>
</dbReference>
<dbReference type="SABIO-RK" id="P09917"/>
<dbReference type="SignaLink" id="P09917"/>
<dbReference type="SIGNOR" id="P09917"/>
<dbReference type="UniPathway" id="UPA00877"/>
<dbReference type="BioGRID-ORCS" id="240">
    <property type="hits" value="26 hits in 1167 CRISPR screens"/>
</dbReference>
<dbReference type="ChiTaRS" id="ALOX5">
    <property type="organism name" value="human"/>
</dbReference>
<dbReference type="EvolutionaryTrace" id="P09917"/>
<dbReference type="GeneWiki" id="Arachidonate_5-lipoxygenase"/>
<dbReference type="GenomeRNAi" id="240"/>
<dbReference type="Pharos" id="P09917">
    <property type="development level" value="Tclin"/>
</dbReference>
<dbReference type="PRO" id="PR:P09917"/>
<dbReference type="Proteomes" id="UP000005640">
    <property type="component" value="Chromosome 10"/>
</dbReference>
<dbReference type="RNAct" id="P09917">
    <property type="molecule type" value="protein"/>
</dbReference>
<dbReference type="Bgee" id="ENSG00000012779">
    <property type="expression patterns" value="Expressed in blood and 97 other cell types or tissues"/>
</dbReference>
<dbReference type="ExpressionAtlas" id="P09917">
    <property type="expression patterns" value="baseline and differential"/>
</dbReference>
<dbReference type="GO" id="GO:0005829">
    <property type="term" value="C:cytosol"/>
    <property type="evidence" value="ECO:0000314"/>
    <property type="project" value="UniProtKB"/>
</dbReference>
<dbReference type="GO" id="GO:0005576">
    <property type="term" value="C:extracellular region"/>
    <property type="evidence" value="ECO:0000304"/>
    <property type="project" value="Reactome"/>
</dbReference>
<dbReference type="GO" id="GO:0005615">
    <property type="term" value="C:extracellular space"/>
    <property type="evidence" value="ECO:0007005"/>
    <property type="project" value="UniProtKB"/>
</dbReference>
<dbReference type="GO" id="GO:1904813">
    <property type="term" value="C:ficolin-1-rich granule lumen"/>
    <property type="evidence" value="ECO:0000304"/>
    <property type="project" value="Reactome"/>
</dbReference>
<dbReference type="GO" id="GO:0005635">
    <property type="term" value="C:nuclear envelope"/>
    <property type="evidence" value="ECO:0000314"/>
    <property type="project" value="UniProtKB"/>
</dbReference>
<dbReference type="GO" id="GO:0005641">
    <property type="term" value="C:nuclear envelope lumen"/>
    <property type="evidence" value="ECO:0000314"/>
    <property type="project" value="UniProtKB"/>
</dbReference>
<dbReference type="GO" id="GO:0016363">
    <property type="term" value="C:nuclear matrix"/>
    <property type="evidence" value="ECO:0000314"/>
    <property type="project" value="UniProtKB"/>
</dbReference>
<dbReference type="GO" id="GO:0031965">
    <property type="term" value="C:nuclear membrane"/>
    <property type="evidence" value="ECO:0000314"/>
    <property type="project" value="UniProtKB"/>
</dbReference>
<dbReference type="GO" id="GO:0005654">
    <property type="term" value="C:nucleoplasm"/>
    <property type="evidence" value="ECO:0000314"/>
    <property type="project" value="HPA"/>
</dbReference>
<dbReference type="GO" id="GO:0048471">
    <property type="term" value="C:perinuclear region of cytoplasm"/>
    <property type="evidence" value="ECO:0000314"/>
    <property type="project" value="UniProtKB"/>
</dbReference>
<dbReference type="GO" id="GO:0034774">
    <property type="term" value="C:secretory granule lumen"/>
    <property type="evidence" value="ECO:0000304"/>
    <property type="project" value="Reactome"/>
</dbReference>
<dbReference type="GO" id="GO:0004052">
    <property type="term" value="F:arachidonate 12(S)-lipoxygenase activity"/>
    <property type="evidence" value="ECO:0007669"/>
    <property type="project" value="RHEA"/>
</dbReference>
<dbReference type="GO" id="GO:0004051">
    <property type="term" value="F:arachidonate 5-lipoxygenase activity"/>
    <property type="evidence" value="ECO:0000314"/>
    <property type="project" value="UniProtKB"/>
</dbReference>
<dbReference type="GO" id="GO:0036403">
    <property type="term" value="F:arachidonate 8(S)-lipoxygenase activity"/>
    <property type="evidence" value="ECO:0007669"/>
    <property type="project" value="RHEA"/>
</dbReference>
<dbReference type="GO" id="GO:0016787">
    <property type="term" value="F:hydrolase activity"/>
    <property type="evidence" value="ECO:0007669"/>
    <property type="project" value="UniProtKB-KW"/>
</dbReference>
<dbReference type="GO" id="GO:0005506">
    <property type="term" value="F:iron ion binding"/>
    <property type="evidence" value="ECO:0000314"/>
    <property type="project" value="UniProtKB"/>
</dbReference>
<dbReference type="GO" id="GO:0016491">
    <property type="term" value="F:oxidoreductase activity"/>
    <property type="evidence" value="ECO:0000304"/>
    <property type="project" value="Reactome"/>
</dbReference>
<dbReference type="GO" id="GO:0016701">
    <property type="term" value="F:oxidoreductase activity, acting on single donors with incorporation of molecular oxygen"/>
    <property type="evidence" value="ECO:0000304"/>
    <property type="project" value="Reactome"/>
</dbReference>
<dbReference type="GO" id="GO:0019369">
    <property type="term" value="P:arachidonate metabolic process"/>
    <property type="evidence" value="ECO:0000318"/>
    <property type="project" value="GO_Central"/>
</dbReference>
<dbReference type="GO" id="GO:0036336">
    <property type="term" value="P:dendritic cell migration"/>
    <property type="evidence" value="ECO:0000250"/>
    <property type="project" value="UniProtKB"/>
</dbReference>
<dbReference type="GO" id="GO:0042593">
    <property type="term" value="P:glucose homeostasis"/>
    <property type="evidence" value="ECO:0000250"/>
    <property type="project" value="UniProtKB"/>
</dbReference>
<dbReference type="GO" id="GO:0006959">
    <property type="term" value="P:humoral immune response"/>
    <property type="evidence" value="ECO:0000250"/>
    <property type="project" value="UniProtKB"/>
</dbReference>
<dbReference type="GO" id="GO:0002232">
    <property type="term" value="P:leukocyte chemotaxis involved in inflammatory response"/>
    <property type="evidence" value="ECO:0000315"/>
    <property type="project" value="UniProtKB"/>
</dbReference>
<dbReference type="GO" id="GO:0002523">
    <property type="term" value="P:leukocyte migration involved in inflammatory response"/>
    <property type="evidence" value="ECO:0000250"/>
    <property type="project" value="UniProtKB"/>
</dbReference>
<dbReference type="GO" id="GO:1901753">
    <property type="term" value="P:leukotriene A4 biosynthetic process"/>
    <property type="evidence" value="ECO:0000314"/>
    <property type="project" value="UniProtKB"/>
</dbReference>
<dbReference type="GO" id="GO:0019370">
    <property type="term" value="P:leukotriene biosynthetic process"/>
    <property type="evidence" value="ECO:0000314"/>
    <property type="project" value="UniProtKB"/>
</dbReference>
<dbReference type="GO" id="GO:0006691">
    <property type="term" value="P:leukotriene metabolic process"/>
    <property type="evidence" value="ECO:0000304"/>
    <property type="project" value="Reactome"/>
</dbReference>
<dbReference type="GO" id="GO:0002540">
    <property type="term" value="P:leukotriene production involved in inflammatory response"/>
    <property type="evidence" value="ECO:0007669"/>
    <property type="project" value="Ensembl"/>
</dbReference>
<dbReference type="GO" id="GO:0034440">
    <property type="term" value="P:lipid oxidation"/>
    <property type="evidence" value="ECO:0000318"/>
    <property type="project" value="GO_Central"/>
</dbReference>
<dbReference type="GO" id="GO:2001301">
    <property type="term" value="P:lipoxin biosynthetic process"/>
    <property type="evidence" value="ECO:0000315"/>
    <property type="project" value="UniProtKB"/>
</dbReference>
<dbReference type="GO" id="GO:0019372">
    <property type="term" value="P:lipoxygenase pathway"/>
    <property type="evidence" value="ECO:0000318"/>
    <property type="project" value="GO_Central"/>
</dbReference>
<dbReference type="GO" id="GO:0042759">
    <property type="term" value="P:long-chain fatty acid biosynthetic process"/>
    <property type="evidence" value="ECO:0000304"/>
    <property type="project" value="Reactome"/>
</dbReference>
<dbReference type="GO" id="GO:0016525">
    <property type="term" value="P:negative regulation of angiogenesis"/>
    <property type="evidence" value="ECO:0000250"/>
    <property type="project" value="UniProtKB"/>
</dbReference>
<dbReference type="GO" id="GO:0001937">
    <property type="term" value="P:negative regulation of endothelial cell proliferation"/>
    <property type="evidence" value="ECO:0000250"/>
    <property type="project" value="UniProtKB"/>
</dbReference>
<dbReference type="GO" id="GO:0050728">
    <property type="term" value="P:negative regulation of inflammatory response"/>
    <property type="evidence" value="ECO:0000314"/>
    <property type="project" value="UniProtKB"/>
</dbReference>
<dbReference type="GO" id="GO:1903573">
    <property type="term" value="P:negative regulation of response to endoplasmic reticulum stress"/>
    <property type="evidence" value="ECO:0000250"/>
    <property type="project" value="UniProtKB"/>
</dbReference>
<dbReference type="GO" id="GO:1903671">
    <property type="term" value="P:negative regulation of sprouting angiogenesis"/>
    <property type="evidence" value="ECO:0000250"/>
    <property type="project" value="UniProtKB"/>
</dbReference>
<dbReference type="GO" id="GO:0061044">
    <property type="term" value="P:negative regulation of vascular wound healing"/>
    <property type="evidence" value="ECO:0000250"/>
    <property type="project" value="UniProtKB"/>
</dbReference>
<dbReference type="GO" id="GO:0061045">
    <property type="term" value="P:negative regulation of wound healing"/>
    <property type="evidence" value="ECO:0000250"/>
    <property type="project" value="UniProtKB"/>
</dbReference>
<dbReference type="GO" id="GO:0030501">
    <property type="term" value="P:positive regulation of bone mineralization"/>
    <property type="evidence" value="ECO:0000250"/>
    <property type="project" value="UniProtKB"/>
</dbReference>
<dbReference type="GO" id="GO:1904999">
    <property type="term" value="P:positive regulation of leukocyte adhesion to arterial endothelial cell"/>
    <property type="evidence" value="ECO:0000250"/>
    <property type="project" value="UniProtKB"/>
</dbReference>
<dbReference type="GO" id="GO:1900407">
    <property type="term" value="P:regulation of cellular response to oxidative stress"/>
    <property type="evidence" value="ECO:0000250"/>
    <property type="project" value="UniProtKB"/>
</dbReference>
<dbReference type="GO" id="GO:1900015">
    <property type="term" value="P:regulation of cytokine production involved in inflammatory response"/>
    <property type="evidence" value="ECO:0000250"/>
    <property type="project" value="UniProtKB"/>
</dbReference>
<dbReference type="GO" id="GO:0045598">
    <property type="term" value="P:regulation of fat cell differentiation"/>
    <property type="evidence" value="ECO:0000250"/>
    <property type="project" value="UniProtKB"/>
</dbReference>
<dbReference type="GO" id="GO:0050727">
    <property type="term" value="P:regulation of inflammatory response"/>
    <property type="evidence" value="ECO:0000315"/>
    <property type="project" value="UniProtKB"/>
</dbReference>
<dbReference type="GO" id="GO:0106014">
    <property type="term" value="P:regulation of inflammatory response to wounding"/>
    <property type="evidence" value="ECO:0000250"/>
    <property type="project" value="UniProtKB"/>
</dbReference>
<dbReference type="GO" id="GO:0050796">
    <property type="term" value="P:regulation of insulin secretion"/>
    <property type="evidence" value="ECO:0000250"/>
    <property type="project" value="UniProtKB"/>
</dbReference>
<dbReference type="GO" id="GO:1903426">
    <property type="term" value="P:regulation of reactive oxygen species biosynthetic process"/>
    <property type="evidence" value="ECO:0000315"/>
    <property type="project" value="UniProtKB"/>
</dbReference>
<dbReference type="CDD" id="cd01753">
    <property type="entry name" value="PLAT_LOX"/>
    <property type="match status" value="1"/>
</dbReference>
<dbReference type="FunFam" id="1.20.245.10:FF:000001">
    <property type="entry name" value="Arachidonate 5-lipoxygenase a"/>
    <property type="match status" value="1"/>
</dbReference>
<dbReference type="FunFam" id="2.60.60.20:FF:000002">
    <property type="entry name" value="Arachidonate 5-lipoxygenase a"/>
    <property type="match status" value="1"/>
</dbReference>
<dbReference type="FunFam" id="3.10.450.60:FF:000003">
    <property type="entry name" value="Arachidonate 5-lipoxygenase a"/>
    <property type="match status" value="1"/>
</dbReference>
<dbReference type="Gene3D" id="3.10.450.60">
    <property type="match status" value="1"/>
</dbReference>
<dbReference type="Gene3D" id="1.20.245.10">
    <property type="entry name" value="Lipoxygenase-1, Domain 5"/>
    <property type="match status" value="1"/>
</dbReference>
<dbReference type="Gene3D" id="2.60.60.20">
    <property type="entry name" value="PLAT/LH2 domain"/>
    <property type="match status" value="1"/>
</dbReference>
<dbReference type="InterPro" id="IPR000907">
    <property type="entry name" value="LipOase"/>
</dbReference>
<dbReference type="InterPro" id="IPR013819">
    <property type="entry name" value="LipOase_C"/>
</dbReference>
<dbReference type="InterPro" id="IPR036226">
    <property type="entry name" value="LipOase_C_sf"/>
</dbReference>
<dbReference type="InterPro" id="IPR020834">
    <property type="entry name" value="LipOase_CS"/>
</dbReference>
<dbReference type="InterPro" id="IPR020833">
    <property type="entry name" value="LipOase_Fe_BS"/>
</dbReference>
<dbReference type="InterPro" id="IPR001885">
    <property type="entry name" value="LipOase_mml"/>
</dbReference>
<dbReference type="InterPro" id="IPR001024">
    <property type="entry name" value="PLAT/LH2_dom"/>
</dbReference>
<dbReference type="InterPro" id="IPR036392">
    <property type="entry name" value="PLAT/LH2_dom_sf"/>
</dbReference>
<dbReference type="InterPro" id="IPR042062">
    <property type="entry name" value="PLAT_LOX_verte"/>
</dbReference>
<dbReference type="PANTHER" id="PTHR11771">
    <property type="entry name" value="LIPOXYGENASE"/>
    <property type="match status" value="1"/>
</dbReference>
<dbReference type="Pfam" id="PF00305">
    <property type="entry name" value="Lipoxygenase"/>
    <property type="match status" value="1"/>
</dbReference>
<dbReference type="Pfam" id="PF01477">
    <property type="entry name" value="PLAT"/>
    <property type="match status" value="1"/>
</dbReference>
<dbReference type="PRINTS" id="PR00087">
    <property type="entry name" value="LIPOXYGENASE"/>
</dbReference>
<dbReference type="PRINTS" id="PR00467">
    <property type="entry name" value="MAMLPOXGNASE"/>
</dbReference>
<dbReference type="SMART" id="SM00308">
    <property type="entry name" value="LH2"/>
    <property type="match status" value="1"/>
</dbReference>
<dbReference type="SUPFAM" id="SSF49723">
    <property type="entry name" value="Lipase/lipooxygenase domain (PLAT/LH2 domain)"/>
    <property type="match status" value="1"/>
</dbReference>
<dbReference type="SUPFAM" id="SSF48484">
    <property type="entry name" value="Lipoxigenase"/>
    <property type="match status" value="1"/>
</dbReference>
<dbReference type="PROSITE" id="PS00711">
    <property type="entry name" value="LIPOXYGENASE_1"/>
    <property type="match status" value="1"/>
</dbReference>
<dbReference type="PROSITE" id="PS00081">
    <property type="entry name" value="LIPOXYGENASE_2"/>
    <property type="match status" value="1"/>
</dbReference>
<dbReference type="PROSITE" id="PS51393">
    <property type="entry name" value="LIPOXYGENASE_3"/>
    <property type="match status" value="1"/>
</dbReference>
<dbReference type="PROSITE" id="PS50095">
    <property type="entry name" value="PLAT"/>
    <property type="match status" value="1"/>
</dbReference>
<protein>
    <recommendedName>
        <fullName evidence="33">Polyunsaturated fatty acid 5-lipoxygenase</fullName>
        <ecNumber evidence="25">1.13.11.-</ecNumber>
    </recommendedName>
    <alternativeName>
        <fullName>Arachidonate 5-lipoxygenase</fullName>
        <shortName evidence="32">5-LO</shortName>
        <shortName evidence="32">5-lipoxygenase</shortName>
        <ecNumber evidence="18">1.13.11.34</ecNumber>
    </alternativeName>
</protein>
<feature type="chain" id="PRO_0000220693" description="Polyunsaturated fatty acid 5-lipoxygenase">
    <location>
        <begin position="1"/>
        <end position="674"/>
    </location>
</feature>
<feature type="domain" description="PLAT" evidence="3">
    <location>
        <begin position="2"/>
        <end position="118"/>
    </location>
</feature>
<feature type="domain" description="Lipoxygenase" evidence="4">
    <location>
        <begin position="119"/>
        <end position="674"/>
    </location>
</feature>
<feature type="binding site" evidence="1">
    <location>
        <position position="17"/>
    </location>
    <ligand>
        <name>Ca(2+)</name>
        <dbReference type="ChEBI" id="CHEBI:29108"/>
        <label>1</label>
        <note>structural</note>
    </ligand>
</feature>
<feature type="binding site" evidence="1">
    <location>
        <position position="18"/>
    </location>
    <ligand>
        <name>Ca(2+)</name>
        <dbReference type="ChEBI" id="CHEBI:29108"/>
        <label>2</label>
        <note>structural</note>
    </ligand>
</feature>
<feature type="binding site" evidence="1">
    <location>
        <position position="19"/>
    </location>
    <ligand>
        <name>Ca(2+)</name>
        <dbReference type="ChEBI" id="CHEBI:29108"/>
        <label>2</label>
        <note>structural</note>
    </ligand>
</feature>
<feature type="binding site" evidence="1">
    <location>
        <position position="44"/>
    </location>
    <ligand>
        <name>Ca(2+)</name>
        <dbReference type="ChEBI" id="CHEBI:29108"/>
        <label>2</label>
        <note>structural</note>
    </ligand>
</feature>
<feature type="binding site" evidence="1">
    <location>
        <position position="45"/>
    </location>
    <ligand>
        <name>Ca(2+)</name>
        <dbReference type="ChEBI" id="CHEBI:29108"/>
        <label>2</label>
        <note>structural</note>
    </ligand>
</feature>
<feature type="binding site" evidence="1">
    <location>
        <position position="47"/>
    </location>
    <ligand>
        <name>Ca(2+)</name>
        <dbReference type="ChEBI" id="CHEBI:29108"/>
        <label>2</label>
        <note>structural</note>
    </ligand>
</feature>
<feature type="binding site" evidence="1">
    <location>
        <position position="79"/>
    </location>
    <ligand>
        <name>Ca(2+)</name>
        <dbReference type="ChEBI" id="CHEBI:29108"/>
        <label>1</label>
        <note>structural</note>
    </ligand>
</feature>
<feature type="binding site" evidence="1">
    <location>
        <position position="80"/>
    </location>
    <ligand>
        <name>Ca(2+)</name>
        <dbReference type="ChEBI" id="CHEBI:29108"/>
        <label>1</label>
        <note>structural</note>
    </ligand>
</feature>
<feature type="binding site" evidence="18 19 41 42 43 44">
    <location>
        <position position="368"/>
    </location>
    <ligand>
        <name>Fe cation</name>
        <dbReference type="ChEBI" id="CHEBI:24875"/>
        <note>catalytic</note>
    </ligand>
</feature>
<feature type="binding site" evidence="18 19 41 42 43 44">
    <location>
        <position position="373"/>
    </location>
    <ligand>
        <name>Fe cation</name>
        <dbReference type="ChEBI" id="CHEBI:24875"/>
        <note>catalytic</note>
    </ligand>
</feature>
<feature type="binding site" evidence="18 19 41 42 43 44">
    <location>
        <position position="551"/>
    </location>
    <ligand>
        <name>Fe cation</name>
        <dbReference type="ChEBI" id="CHEBI:24875"/>
        <note>catalytic</note>
    </ligand>
</feature>
<feature type="binding site" evidence="18 19 41 42 44">
    <location>
        <position position="555"/>
    </location>
    <ligand>
        <name>Fe cation</name>
        <dbReference type="ChEBI" id="CHEBI:24875"/>
        <note>catalytic</note>
    </ligand>
</feature>
<feature type="binding site" evidence="18 19 41 42 43 44">
    <location>
        <position position="674"/>
    </location>
    <ligand>
        <name>Fe cation</name>
        <dbReference type="ChEBI" id="CHEBI:24875"/>
        <note>catalytic</note>
    </ligand>
</feature>
<feature type="site" description="Essential for stabilizing binding to COTL1" evidence="15">
    <location>
        <position position="103"/>
    </location>
</feature>
<feature type="modified residue" description="Phosphoserine; by MAPKAPK2" evidence="5 11">
    <location>
        <position position="272"/>
    </location>
</feature>
<feature type="modified residue" description="Phosphoserine; by PKA" evidence="6 23">
    <location>
        <position position="524"/>
    </location>
</feature>
<feature type="splice variant" id="VSP_053534" description="In isoform 3." evidence="31">
    <location>
        <begin position="424"/>
        <end position="455"/>
    </location>
</feature>
<feature type="splice variant" id="VSP_053535" description="In isoform 4." evidence="31">
    <original>ANATGGGGHVQMVQRAMKDLTYASLCFPEAIKARGMESKEDIPYYFYRDDGLLVWEAIRTFTAEVVDIYYEGDQVVEEDPELQDFVNDVYVYGMRGRKSSGFPKSVKSR</original>
    <variation>VHGRGGRHLLRGRPGGGGGPGAAGLRERCLRVRHAGPQVLRLPQVGQEPGAAVGVPDRGDLHRLRPARRGQLRPAVPGHVPRRAFYREACEGSHGPIPQEPRGHCQRDC</variation>
    <location>
        <begin position="425"/>
        <end position="533"/>
    </location>
</feature>
<feature type="splice variant" id="VSP_053536" description="In isoform 5." evidence="31">
    <location>
        <begin position="485"/>
        <end position="674"/>
    </location>
</feature>
<feature type="splice variant" id="VSP_053537" description="In isoform 4." evidence="31">
    <location>
        <begin position="534"/>
        <end position="674"/>
    </location>
</feature>
<feature type="splice variant" id="VSP_046998" description="In isoform 2." evidence="30 31">
    <location>
        <begin position="559"/>
        <end position="615"/>
    </location>
</feature>
<feature type="sequence variant" id="VAR_028018" description="Decreases arachidonate 5-lipoxygenase activity. Increases leukotriene A4 synthase activity; dbSNP:rs2228065." evidence="7 21">
    <original>E</original>
    <variation>K</variation>
    <location>
        <position position="254"/>
    </location>
</feature>
<feature type="sequence variant" id="VAR_083301" description="Decreases arachidonate 5-lipoxygenase activity." evidence="21">
    <original>P</original>
    <variation>S</variation>
    <location>
        <position position="337"/>
    </location>
</feature>
<feature type="sequence variant" id="VAR_083302" description="Increases arachidonate 5-lipoxygenase activity." evidence="21">
    <original>A</original>
    <variation>S</variation>
    <location>
        <position position="447"/>
    </location>
</feature>
<feature type="sequence variant" id="VAR_083303" description="Decreases arachidonate 5-lipoxygenase activity." evidence="21">
    <original>A</original>
    <variation>V</variation>
    <location>
        <position position="549"/>
    </location>
</feature>
<feature type="sequence variant" id="VAR_083304" description="Does not affect arachidonate 5-lipoxygenase activity." evidence="21">
    <original>P</original>
    <variation>L</variation>
    <location>
        <position position="577"/>
    </location>
</feature>
<feature type="sequence variant" id="VAR_083305" description="Increases arachidonate 5-lipoxygenase activity. Does not affect leukotriene A4 synthase activity." evidence="21">
    <original>T</original>
    <variation>M</variation>
    <location>
        <position position="591"/>
    </location>
</feature>
<feature type="sequence variant" id="VAR_083306" description="Increases arachidonate 5-lipoxygenase activity." evidence="21">
    <original>K</original>
    <variation>Q</variation>
    <location>
        <position position="656"/>
    </location>
</feature>
<feature type="mutagenesis site" description="Impairs interaction with DICER1; when associated with A-76 and A-103." evidence="12">
    <original>W</original>
    <variation>A</variation>
    <location>
        <position position="14"/>
    </location>
</feature>
<feature type="mutagenesis site" description="Impairs interaction with DICER1; when associated with A-14 and A-103." evidence="12">
    <original>W</original>
    <variation>A</variation>
    <location>
        <position position="76"/>
    </location>
</feature>
<feature type="mutagenesis site" description="Abolishes binding to COTL1. Impairs interaction with DICER; when associated with A-14 and A-76." evidence="12 15">
    <original>W</original>
    <variation>A</variation>
    <location>
        <position position="103"/>
    </location>
</feature>
<feature type="mutagenesis site" description="Loss of phosphorylation site. Permits export from the nucleus." evidence="11">
    <original>S</original>
    <variation>A</variation>
    <location>
        <position position="272"/>
    </location>
</feature>
<feature type="mutagenesis site" description="No loss of activity.">
    <original>D</original>
    <variation>N</variation>
    <location>
        <position position="359"/>
    </location>
</feature>
<feature type="mutagenesis site" description="Loss of (5S)-lipoxygenase activity; when associated with I-425 and M-426. Loss of (5S)-lipoxygenase activity; when associated with I-425; M-426 and I-604. Exhibits a major (15S)-lipoxygenase activity; when associated with I-425 and M-426. Exhibits a major (15S)-lipoxygenase activity; when associated with I-425; M-426 and I-604. Does not catalyze oxygenation of arachodonic acid to 5-HETE; when associated with I-425: M-426 and I-604. Catalyzes oxygenation of arachodonic acid to form mostly (15S)-HETE and (8S)-HETE but also 12-HETE; when associated with I-425: M-426 and I-604. Abolishes the LTA4-synthase activity; when associated with I-425: M-426 and I-604. Catalyzes oxygenation of linoleic acid to (13S)- and (9S)-HODE; when associated with I-425: M-426 and I-604. Catalyzes oxygenation of (11S)- and (11R)-deutero-linoleic acid to 9-HODE and (13S)-HODE respectively; when associated with I-425: M-426 and I-604. Catalyzes oxygenation of alpha-linolenic acid (ALA) to 13-HOTrE(n-3); when associated with I-425: M-426 and I-604. Catalyzes oxygenation of gamma-linolenic acid (GLA) to 13-HOTrE(n-6) and 10-HOTrE; when associated with I-425: M-426 and I-604. Catalyzes the oxygenation of eicosapentaenoic acid (EPA) to 12- and 15-HEPA; when associated with I-425: M-426 and I-604. Catalyzes the oxygenation of docosahexaenoic acid (DHA) to 10- and 17-HDHA; when associated with I-425: M-426 and I-604. Exhibits a lipoxin synthase activity towards (5S)-HETE as major substrates followed by (5S),(15S)-DiHETE and (15S)-HETE; when associated with I-425: M-426 and I-604." evidence="20 25">
    <original>F</original>
    <variation>W</variation>
    <location>
        <position position="360"/>
    </location>
</feature>
<feature type="mutagenesis site" description="Still some substantial activity." evidence="14">
    <original>H</original>
    <variation>S</variation>
    <variation>N</variation>
    <location>
        <position position="363"/>
    </location>
</feature>
<feature type="mutagenesis site" description="No activity." evidence="8 14">
    <original>H</original>
    <variation>S</variation>
    <variation>N</variation>
    <variation>A</variation>
    <location>
        <position position="368"/>
    </location>
</feature>
<feature type="mutagenesis site" description="No activity." evidence="8 14">
    <original>H</original>
    <variation>S</variation>
    <variation>N</variation>
    <location>
        <position position="373"/>
    </location>
</feature>
<feature type="mutagenesis site" description="No activity." evidence="8">
    <original>E</original>
    <variation>Q</variation>
    <location>
        <position position="377"/>
    </location>
</feature>
<feature type="mutagenesis site" description="No activity." evidence="8 14">
    <original>H</original>
    <variation>A</variation>
    <location>
        <position position="391"/>
    </location>
</feature>
<feature type="mutagenesis site" description="Still some substantial activity." evidence="8 14">
    <original>H</original>
    <variation>S</variation>
    <variation>N</variation>
    <location>
        <position position="391"/>
    </location>
</feature>
<feature type="mutagenesis site" description="No activity." evidence="8 14">
    <original>H</original>
    <variation>A</variation>
    <location>
        <position position="400"/>
    </location>
</feature>
<feature type="mutagenesis site" description="Still some substantial activity." evidence="8 14">
    <original>H</original>
    <variation>S</variation>
    <variation>N</variation>
    <location>
        <position position="400"/>
    </location>
</feature>
<feature type="mutagenesis site" description="Loss of (5S)-lipoxygenase activity; when associated with W-360 and M-426. Loss of (5S)-lipoxygenase activity; when associated with W-360; M-426 and I-604. Exhibits a major (15S)-lipoxygenase activity; when associated with W-360 and M-426. Exhibits a major (15S)-lipoxygenase activity; when associated with W-360; M-426 and I-604. Does not catalyze oxygenation of arachodonic acid to 5-HETE; when associated with W-360; M-426 and I-604. Catalyzes oxygenation of arachodonic acid to form in majority (15S)-HETE and (8S)-HETE but also 12-HETE; when associated with W-360; M-426 and I-604. Abolishes the LTA4-synthase activity; when associated with W-360; M-426 and I-604. Catalyzes oxygenation of linoleic acid to (13S)- and (9S)-HODE; when associated with W-360; M-426 and I-604. Catalyzes oxygenation of (11S)- and (11R)-deutero-linoleic acid to 9-HODE and (13S)-HODE respectively; when associated with W-360; M-426 and I-604. Catalyzes oxygenation of alpha-linolenic acid (ALA) to 13-HOTrE(n-3); when associated with W-360; M-426 and I-604. Catalyzes oxygenation of gamma-linolenic acid (GLA) to 13-HOTrE(n-6) and 10-HOTrE; when associated with W-360; M-426 and I-604. Catalyzes the oxygenation of eicosapentaenoic acid (EPA) to 12- and 15-HEPA; when associated with W-360; M-426 and I-604. Catalyzes the oxygenation of docosahexaenoic acid (DHA) to 10- and 17-HDHA; when associated with W-360; M-426 and I-604. Exhibits a lipoxin synthase activity towards (5S)-HETE as major substrates followed by (5S),(15S)-DiHETE and (15S)-HETE; when associated with W-360; M-426 and I-604." evidence="20 25">
    <original>A</original>
    <variation>I</variation>
    <location>
        <position position="425"/>
    </location>
</feature>
<feature type="mutagenesis site" description="Loss of (5S)-lipoxygenase activity; when associated with W-360 and I-425. Loss of (5S)-lipoxygenase activity; when associated with W-360; I-425 and I-604. Exhibits a major (15S)-lipoxygenase activity; when associated with W-360 and I-425. Exhibits a major (15S)-lipoxygenase activity; when associated with W-360; I-425 and I-604. Does not catalyze oxygenation of arachodonic acid to 5-HETE; when associated with W-360; I-425 and I-604. Catalyzes oxygenation of arachodonic acid to form in majority (15S)-HETE and (8S)-HETE but also 12-HETE; when associated with W-360; I-425 and I-604. Abolishes the LTA4-synthase activity; when associated with W-360; I-425 and I-604. Catalyzes oxygenation of linoleic acid to (13S)- and (9S)-HODE; when associated with W-360; I-425 and I-604. Catalyzes oxygenation of (11S)- and (11R)-deutero-linoleic acid to 9-HODE and (13S)-HODE respectively; when associated with W-360; I-425 and I-604. Catalyzes oxygenation of alpha-linolenic acid (ALA) to 13-HOTrE(n-3); when associated with W-360; I-425 and I-604. Catalyzes oxygenation of gamma-linolenic acid (GLA) to 13-HOTrE(n-6) and 10-HOTrE; when associated with W-360; I-425 and I-604. Catalyzes the oxygenation of eicosapentaenoic acid (EPA) to 12- and 15-HEPA; when associated with W-360; I-425 and I-604. Catalyzes the oxygenation of docosahexaenoic acid (DHA) to 10- and 17-HDHA; when associated with W-360; I-425 and I-604. Exhibits a lipoxin synthase activity towards (5S)-HETE as major substrates followed by (5S),(15S)-DiHETE and (15S)-HETE; when associated with W-360; I-425 and I-604." evidence="20 25">
    <original>N</original>
    <variation>M</variation>
    <location>
        <position position="426"/>
    </location>
</feature>
<feature type="mutagenesis site" description="Almost no loss of activity.">
    <original>H</original>
    <variation>N</variation>
    <variation>A</variation>
    <location>
        <position position="433"/>
    </location>
</feature>
<feature type="mutagenesis site" description="Prevents phosphorylation by PKA." evidence="6">
    <original>S</original>
    <variation>A</variation>
    <location>
        <position position="524"/>
    </location>
</feature>
<feature type="mutagenesis site" description="No activity." evidence="8">
    <original>H</original>
    <variation>N</variation>
    <variation>A</variation>
    <location>
        <position position="551"/>
    </location>
</feature>
<feature type="mutagenesis site" description="Loss of (5S)-lipoxygenase activity. Loss of (5S)-lipoxygenase activity; when associated with W-360; I-425 and M-426. Exhibits a major (15S)-lipoxygenase activity;when associated with W-360; I-425 and M-426. Does not catalyze oxygenation of arachodonic acid to 5-HETE; when associated with W-360; I-425 and M-426. Catalyzes oxygenation of arachodonic acid to form in majority (15S)-HETE and (8S)-HETE but also 12-HETE; when associated with W-360; I-425 and M-426. Abolishes the LTA4-synthase activity; when associated with W-360; I-425 and M-426. Catalyzes oxygenation of linoleic acid to (13S)- and (9 S)-HODE; when associated with W-360; I-425 and M-426. Catalyzes oxygenation of (11S)- and (11R)-deutero-linoleic acid to 9-HODE and (13S)-HODE respectively; when associated with W-360; I-425 and M-426. Catalyzes oxygenation of alpha-linolenic acid (ALA) to 13-HOTrE(n-3); when associated with W-360; I-425 and M-426. Catalyzes oxygenation of gamma-linolenic acid (GLA) to 13-HOTrE(n-6) and 10-HOTrE; when associated with W-360; I-425 and M-426. Catalyzes the oxygenation of eicosapentaenoic acid (EPA) to 12- and 15-HEPA; when associated with W-360; I-425 and M-426. Catalyzes the oxygenation of docosahexaenoic acid (DHA) to 10- and 17-HDHA; when associated with W-360; I-425 and M-426. Exhibits a lipoxin synthase activity towards (5S)-HETE as major substrates followed by (5S),(15S)-DiHETE and (15S)-HETE; when associated with W-360; I-425 and M-426." evidence="20 25">
    <original>A</original>
    <variation>I</variation>
    <location>
        <position position="604"/>
    </location>
</feature>
<feature type="mutagenesis site" description="Does not affect arachidonate 5-lipoxygenase activity. Does not oxygenate arachidonate typical 15-lipoxygenase substrates such as dihomo-gamma-linolenic acid and N-arachidonyl glycine." evidence="19">
    <original>S</original>
    <variation>A</variation>
    <location>
        <position position="664"/>
    </location>
</feature>
<feature type="mutagenesis site" description="Enhances affinity for arachidonic acid. Impairs arachidonate 5-lipoxygenase activity. Induces arachidonate 15-lipoxygenase activity. Oxygenates typical arachidonate 15-lipoxygenase substrates such as dihomo-gamma-linolenic acid and N-arachidonyl glycine. Synthesizes lipoxin A4 when incubated with a stable 5-lipoxygenase." evidence="19">
    <original>S</original>
    <variation>D</variation>
    <location>
        <position position="664"/>
    </location>
</feature>
<feature type="strand" evidence="50">
    <location>
        <begin position="4"/>
        <end position="10"/>
    </location>
</feature>
<feature type="strand" evidence="50">
    <location>
        <begin position="20"/>
        <end position="28"/>
    </location>
</feature>
<feature type="strand" evidence="49">
    <location>
        <begin position="36"/>
        <end position="38"/>
    </location>
</feature>
<feature type="strand" evidence="50">
    <location>
        <begin position="51"/>
        <end position="56"/>
    </location>
</feature>
<feature type="strand" evidence="50">
    <location>
        <begin position="64"/>
        <end position="73"/>
    </location>
</feature>
<feature type="strand" evidence="50">
    <location>
        <begin position="75"/>
        <end position="77"/>
    </location>
</feature>
<feature type="strand" evidence="50">
    <location>
        <begin position="81"/>
        <end position="89"/>
    </location>
</feature>
<feature type="strand" evidence="50">
    <location>
        <begin position="95"/>
        <end position="104"/>
    </location>
</feature>
<feature type="strand" evidence="46">
    <location>
        <begin position="106"/>
        <end position="108"/>
    </location>
</feature>
<feature type="strand" evidence="50">
    <location>
        <begin position="110"/>
        <end position="113"/>
    </location>
</feature>
<feature type="helix" evidence="50">
    <location>
        <begin position="120"/>
        <end position="122"/>
    </location>
</feature>
<feature type="helix" evidence="50">
    <location>
        <begin position="126"/>
        <end position="142"/>
    </location>
</feature>
<feature type="strand" evidence="50">
    <location>
        <begin position="155"/>
        <end position="157"/>
    </location>
</feature>
<feature type="helix" evidence="50">
    <location>
        <begin position="161"/>
        <end position="163"/>
    </location>
</feature>
<feature type="helix" evidence="50">
    <location>
        <begin position="166"/>
        <end position="168"/>
    </location>
</feature>
<feature type="strand" evidence="50">
    <location>
        <begin position="171"/>
        <end position="176"/>
    </location>
</feature>
<feature type="helix" evidence="50">
    <location>
        <begin position="178"/>
        <end position="188"/>
    </location>
</feature>
<feature type="helix" evidence="50">
    <location>
        <begin position="192"/>
        <end position="194"/>
    </location>
</feature>
<feature type="helix" evidence="49">
    <location>
        <begin position="196"/>
        <end position="198"/>
    </location>
</feature>
<feature type="helix" evidence="50">
    <location>
        <begin position="205"/>
        <end position="212"/>
    </location>
</feature>
<feature type="turn" evidence="50">
    <location>
        <begin position="213"/>
        <end position="215"/>
    </location>
</feature>
<feature type="helix" evidence="50">
    <location>
        <begin position="218"/>
        <end position="226"/>
    </location>
</feature>
<feature type="helix" evidence="50">
    <location>
        <begin position="230"/>
        <end position="239"/>
    </location>
</feature>
<feature type="helix" evidence="50">
    <location>
        <begin position="260"/>
        <end position="263"/>
    </location>
</feature>
<feature type="turn" evidence="50">
    <location>
        <begin position="264"/>
        <end position="266"/>
    </location>
</feature>
<feature type="helix" evidence="50">
    <location>
        <begin position="273"/>
        <end position="279"/>
    </location>
</feature>
<feature type="strand" evidence="50">
    <location>
        <begin position="282"/>
        <end position="286"/>
    </location>
</feature>
<feature type="helix" evidence="50">
    <location>
        <begin position="288"/>
        <end position="290"/>
    </location>
</feature>
<feature type="strand" evidence="47">
    <location>
        <begin position="297"/>
        <end position="300"/>
    </location>
</feature>
<feature type="helix" evidence="47">
    <location>
        <begin position="303"/>
        <end position="306"/>
    </location>
</feature>
<feature type="strand" evidence="50">
    <location>
        <begin position="310"/>
        <end position="315"/>
    </location>
</feature>
<feature type="strand" evidence="50">
    <location>
        <begin position="321"/>
        <end position="331"/>
    </location>
</feature>
<feature type="strand" evidence="51">
    <location>
        <begin position="334"/>
        <end position="336"/>
    </location>
</feature>
<feature type="helix" evidence="50">
    <location>
        <begin position="345"/>
        <end position="365"/>
    </location>
</feature>
<feature type="helix" evidence="50">
    <location>
        <begin position="366"/>
        <end position="372"/>
    </location>
</feature>
<feature type="helix" evidence="50">
    <location>
        <begin position="373"/>
        <end position="386"/>
    </location>
</feature>
<feature type="helix" evidence="50">
    <location>
        <begin position="392"/>
        <end position="397"/>
    </location>
</feature>
<feature type="helix" evidence="50">
    <location>
        <begin position="398"/>
        <end position="400"/>
    </location>
</feature>
<feature type="helix" evidence="50">
    <location>
        <begin position="404"/>
        <end position="414"/>
    </location>
</feature>
<feature type="helix" evidence="50">
    <location>
        <begin position="421"/>
        <end position="423"/>
    </location>
</feature>
<feature type="turn" evidence="50">
    <location>
        <begin position="427"/>
        <end position="431"/>
    </location>
</feature>
<feature type="helix" evidence="50">
    <location>
        <begin position="432"/>
        <end position="441"/>
    </location>
</feature>
<feature type="helix" evidence="50">
    <location>
        <begin position="447"/>
        <end position="449"/>
    </location>
</feature>
<feature type="helix" evidence="50">
    <location>
        <begin position="451"/>
        <end position="457"/>
    </location>
</feature>
<feature type="turn" evidence="50">
    <location>
        <begin position="463"/>
        <end position="465"/>
    </location>
</feature>
<feature type="helix" evidence="50">
    <location>
        <begin position="470"/>
        <end position="493"/>
    </location>
</feature>
<feature type="helix" evidence="50">
    <location>
        <begin position="497"/>
        <end position="502"/>
    </location>
</feature>
<feature type="helix" evidence="50">
    <location>
        <begin position="504"/>
        <end position="515"/>
    </location>
</feature>
<feature type="turn" evidence="46">
    <location>
        <begin position="516"/>
        <end position="520"/>
    </location>
</feature>
<feature type="helix" evidence="50">
    <location>
        <begin position="522"/>
        <end position="524"/>
    </location>
</feature>
<feature type="helix" evidence="50">
    <location>
        <begin position="533"/>
        <end position="547"/>
    </location>
</feature>
<feature type="helix" evidence="50">
    <location>
        <begin position="549"/>
        <end position="555"/>
    </location>
</feature>
<feature type="helix" evidence="50">
    <location>
        <begin position="558"/>
        <end position="562"/>
    </location>
</feature>
<feature type="helix" evidence="50">
    <location>
        <begin position="565"/>
        <end position="567"/>
    </location>
</feature>
<feature type="strand" evidence="45">
    <location>
        <begin position="572"/>
        <end position="574"/>
    </location>
</feature>
<feature type="strand" evidence="46">
    <location>
        <begin position="579"/>
        <end position="581"/>
    </location>
</feature>
<feature type="helix" evidence="50">
    <location>
        <begin position="585"/>
        <end position="591"/>
    </location>
</feature>
<feature type="helix" evidence="50">
    <location>
        <begin position="595"/>
        <end position="608"/>
    </location>
</feature>
<feature type="helix" evidence="50">
    <location>
        <begin position="629"/>
        <end position="654"/>
    </location>
</feature>
<feature type="strand" evidence="48">
    <location>
        <begin position="656"/>
        <end position="658"/>
    </location>
</feature>
<feature type="helix" evidence="50">
    <location>
        <begin position="665"/>
        <end position="667"/>
    </location>
</feature>
<feature type="strand" evidence="50">
    <location>
        <begin position="669"/>
        <end position="671"/>
    </location>
</feature>
<sequence length="674" mass="77983">MPSYTVTVATGSQWFAGTDDYIYLSLVGSAGCSEKHLLDKPFYNDFERGAVDSYDVTVDEELGEIQLVRIEKRKYWLNDDWYLKYITLKTPHGDYIEFPCYRWITGDVEVVLRDGRAKLARDDQIHILKQHRRKELETRQKQYRWMEWNPGFPLSIDAKCHKDLPRDIQFDSEKGVDFVLNYSKAMENLFINRFMHMFQSSWNDFADFEKIFVKISNTISERVMNHWQEDLMFGYQFLNGCNPVLIRRCTELPEKLPVTTEMVECSLERQLSLEQEVQQGNIFIVDFELLDGIDANKTDPCTLQFLAAPICLLYKNLANKIVPIAIQLNQIPGDENPIFLPSDAKYDWLLAKIWVRSSDFHVHQTITHLLRTHLVSEVFGIAMYRQLPAVHPIFKLLVAHVRFTIAINTKAREQLICECGLFDKANATGGGGHVQMVQRAMKDLTYASLCFPEAIKARGMESKEDIPYYFYRDDGLLVWEAIRTFTAEVVDIYYEGDQVVEEDPELQDFVNDVYVYGMRGRKSSGFPKSVKSREQLSEYLTVVIFTASAQHAAVNFGQYDWCSWIPNAPPTMRAPPPTAKGVVTIEQIVDTLPDRGRSCWHLGAVWALSQFQENELFLGMYPEEHFIEKPVKEAMARFRKNLEAIVSVIAERNKKKQLPYYYLSPDRIPNSVAI</sequence>
<keyword id="KW-0002">3D-structure</keyword>
<keyword id="KW-0025">Alternative splicing</keyword>
<keyword id="KW-0106">Calcium</keyword>
<keyword id="KW-0963">Cytoplasm</keyword>
<keyword id="KW-0223">Dioxygenase</keyword>
<keyword id="KW-0903">Direct protein sequencing</keyword>
<keyword id="KW-0378">Hydrolase</keyword>
<keyword id="KW-0408">Iron</keyword>
<keyword id="KW-0434">Leukotriene biosynthesis</keyword>
<keyword id="KW-0443">Lipid metabolism</keyword>
<keyword id="KW-0472">Membrane</keyword>
<keyword id="KW-0479">Metal-binding</keyword>
<keyword id="KW-0539">Nucleus</keyword>
<keyword id="KW-0560">Oxidoreductase</keyword>
<keyword id="KW-0597">Phosphoprotein</keyword>
<keyword id="KW-1267">Proteomics identification</keyword>
<keyword id="KW-1185">Reference proteome</keyword>
<reference key="1">
    <citation type="journal article" date="1988" name="Proc. Natl. Acad. Sci. U.S.A.">
        <title>Cloning of the cDNA for human 5-lipoxygenase.</title>
        <authorList>
            <person name="Dixon R.A.F."/>
            <person name="Jones R.E."/>
            <person name="Diehl R.E."/>
            <person name="Bennett C.D."/>
            <person name="Kargman S."/>
            <person name="Rouzer C.A."/>
        </authorList>
    </citation>
    <scope>NUCLEOTIDE SEQUENCE [MRNA] (ISOFORM 1)</scope>
    <scope>PARTIAL PROTEIN SEQUENCE</scope>
</reference>
<reference key="2">
    <citation type="journal article" date="1988" name="Proc. Natl. Acad. Sci. U.S.A.">
        <title>Molecular cloning and amino acid sequence of human 5-lipoxygenase.</title>
        <authorList>
            <person name="Matsumoto T."/>
            <person name="Funk C.D."/>
            <person name="Raadmark O."/>
            <person name="Hoeoeg J.-O."/>
            <person name="Joernvall H."/>
            <person name="Samuelsson B."/>
        </authorList>
    </citation>
    <scope>NUCLEOTIDE SEQUENCE [MRNA] (ISOFORM 1)</scope>
</reference>
<reference key="3">
    <citation type="journal article" date="1988" name="Proc. Natl. Acad. Sci. U.S.A.">
        <authorList>
            <person name="Matsumoto T."/>
            <person name="Funk C.D."/>
            <person name="Raadmark O."/>
            <person name="Hoeoeg J.-O."/>
            <person name="Joernvall H."/>
            <person name="Samuelsson B."/>
        </authorList>
    </citation>
    <scope>ERRATUM OF PUBMED:2829172</scope>
</reference>
<reference key="4">
    <citation type="journal article" date="1989" name="Adv. Prostaglandin Thromboxane Leukotriene Res.">
        <title>Molecular cloning and amino acid sequence of human 5-lipoxygenase.</title>
        <authorList>
            <person name="Matsumoto T."/>
            <person name="Funk C.D."/>
            <person name="Raadmark O."/>
            <person name="Hoeoeg J.-O."/>
            <person name="Joernvall H."/>
            <person name="Samuelsson B."/>
        </authorList>
    </citation>
    <scope>NUCLEOTIDE SEQUENCE [MRNA] (ISOFORM 1)</scope>
    <scope>PARTIAL PROTEIN SEQUENCE</scope>
</reference>
<reference key="5">
    <citation type="journal article" date="2011" name="FASEB J.">
        <title>Novel 5-lipoxygenase isoforms affect the biosynthesis of 5-lipoxygenase products.</title>
        <authorList>
            <person name="Boudreau L.H."/>
            <person name="Bertin J."/>
            <person name="Robichaud P.P."/>
            <person name="Laflamme M."/>
            <person name="Ouellette R.J."/>
            <person name="Flamand N."/>
            <person name="Surette M.E."/>
        </authorList>
    </citation>
    <scope>NUCLEOTIDE SEQUENCE [MRNA] (ISOFORMS 1; 2; 3; 4 AND 5)</scope>
</reference>
<reference key="6">
    <citation type="journal article" date="2004" name="Nature">
        <title>The DNA sequence and comparative analysis of human chromosome 10.</title>
        <authorList>
            <person name="Deloukas P."/>
            <person name="Earthrowl M.E."/>
            <person name="Grafham D.V."/>
            <person name="Rubenfield M."/>
            <person name="French L."/>
            <person name="Steward C.A."/>
            <person name="Sims S.K."/>
            <person name="Jones M.C."/>
            <person name="Searle S."/>
            <person name="Scott C."/>
            <person name="Howe K."/>
            <person name="Hunt S.E."/>
            <person name="Andrews T.D."/>
            <person name="Gilbert J.G.R."/>
            <person name="Swarbreck D."/>
            <person name="Ashurst J.L."/>
            <person name="Taylor A."/>
            <person name="Battles J."/>
            <person name="Bird C.P."/>
            <person name="Ainscough R."/>
            <person name="Almeida J.P."/>
            <person name="Ashwell R.I.S."/>
            <person name="Ambrose K.D."/>
            <person name="Babbage A.K."/>
            <person name="Bagguley C.L."/>
            <person name="Bailey J."/>
            <person name="Banerjee R."/>
            <person name="Bates K."/>
            <person name="Beasley H."/>
            <person name="Bray-Allen S."/>
            <person name="Brown A.J."/>
            <person name="Brown J.Y."/>
            <person name="Burford D.C."/>
            <person name="Burrill W."/>
            <person name="Burton J."/>
            <person name="Cahill P."/>
            <person name="Camire D."/>
            <person name="Carter N.P."/>
            <person name="Chapman J.C."/>
            <person name="Clark S.Y."/>
            <person name="Clarke G."/>
            <person name="Clee C.M."/>
            <person name="Clegg S."/>
            <person name="Corby N."/>
            <person name="Coulson A."/>
            <person name="Dhami P."/>
            <person name="Dutta I."/>
            <person name="Dunn M."/>
            <person name="Faulkner L."/>
            <person name="Frankish A."/>
            <person name="Frankland J.A."/>
            <person name="Garner P."/>
            <person name="Garnett J."/>
            <person name="Gribble S."/>
            <person name="Griffiths C."/>
            <person name="Grocock R."/>
            <person name="Gustafson E."/>
            <person name="Hammond S."/>
            <person name="Harley J.L."/>
            <person name="Hart E."/>
            <person name="Heath P.D."/>
            <person name="Ho T.P."/>
            <person name="Hopkins B."/>
            <person name="Horne J."/>
            <person name="Howden P.J."/>
            <person name="Huckle E."/>
            <person name="Hynds C."/>
            <person name="Johnson C."/>
            <person name="Johnson D."/>
            <person name="Kana A."/>
            <person name="Kay M."/>
            <person name="Kimberley A.M."/>
            <person name="Kershaw J.K."/>
            <person name="Kokkinaki M."/>
            <person name="Laird G.K."/>
            <person name="Lawlor S."/>
            <person name="Lee H.M."/>
            <person name="Leongamornlert D.A."/>
            <person name="Laird G."/>
            <person name="Lloyd C."/>
            <person name="Lloyd D.M."/>
            <person name="Loveland J."/>
            <person name="Lovell J."/>
            <person name="McLaren S."/>
            <person name="McLay K.E."/>
            <person name="McMurray A."/>
            <person name="Mashreghi-Mohammadi M."/>
            <person name="Matthews L."/>
            <person name="Milne S."/>
            <person name="Nickerson T."/>
            <person name="Nguyen M."/>
            <person name="Overton-Larty E."/>
            <person name="Palmer S.A."/>
            <person name="Pearce A.V."/>
            <person name="Peck A.I."/>
            <person name="Pelan S."/>
            <person name="Phillimore B."/>
            <person name="Porter K."/>
            <person name="Rice C.M."/>
            <person name="Rogosin A."/>
            <person name="Ross M.T."/>
            <person name="Sarafidou T."/>
            <person name="Sehra H.K."/>
            <person name="Shownkeen R."/>
            <person name="Skuce C.D."/>
            <person name="Smith M."/>
            <person name="Standring L."/>
            <person name="Sycamore N."/>
            <person name="Tester J."/>
            <person name="Thorpe A."/>
            <person name="Torcasso W."/>
            <person name="Tracey A."/>
            <person name="Tromans A."/>
            <person name="Tsolas J."/>
            <person name="Wall M."/>
            <person name="Walsh J."/>
            <person name="Wang H."/>
            <person name="Weinstock K."/>
            <person name="West A.P."/>
            <person name="Willey D.L."/>
            <person name="Whitehead S.L."/>
            <person name="Wilming L."/>
            <person name="Wray P.W."/>
            <person name="Young L."/>
            <person name="Chen Y."/>
            <person name="Lovering R.C."/>
            <person name="Moschonas N.K."/>
            <person name="Siebert R."/>
            <person name="Fechtel K."/>
            <person name="Bentley D."/>
            <person name="Durbin R.M."/>
            <person name="Hubbard T."/>
            <person name="Doucette-Stamm L."/>
            <person name="Beck S."/>
            <person name="Smith D.R."/>
            <person name="Rogers J."/>
        </authorList>
    </citation>
    <scope>NUCLEOTIDE SEQUENCE [LARGE SCALE GENOMIC DNA]</scope>
</reference>
<reference key="7">
    <citation type="journal article" date="2004" name="Genome Res.">
        <title>The status, quality, and expansion of the NIH full-length cDNA project: the Mammalian Gene Collection (MGC).</title>
        <authorList>
            <consortium name="The MGC Project Team"/>
        </authorList>
    </citation>
    <scope>NUCLEOTIDE SEQUENCE [LARGE SCALE MRNA] (ISOFORMS 1 AND 2)</scope>
    <source>
        <tissue>Brain</tissue>
    </source>
</reference>
<reference key="8">
    <citation type="journal article" date="1989" name="Proc. Natl. Acad. Sci. U.S.A.">
        <title>Characterization of the human 5-lipoxygenase gene.</title>
        <authorList>
            <person name="Funk C.D."/>
            <person name="Hoshiko S."/>
            <person name="Matsumoto T."/>
            <person name="Raadmark O."/>
            <person name="Samuelsson B."/>
        </authorList>
    </citation>
    <scope>NUCLEOTIDE SEQUENCE [GENOMIC DNA] OF 1-50</scope>
</reference>
<reference key="9">
    <citation type="journal article" date="1990" name="Proc. Natl. Acad. Sci. U.S.A.">
        <title>Characterization of the human 5-lipoxygenase gene promoter.</title>
        <authorList>
            <person name="Hoshiko S."/>
            <person name="Raadmark O."/>
            <person name="Samuelsson B."/>
        </authorList>
    </citation>
    <scope>NUCLEOTIDE SEQUENCE [GENOMIC DNA] OF 1-11</scope>
</reference>
<reference key="10">
    <citation type="journal article" date="1987" name="Proc. Natl. Acad. Sci. U.S.A.">
        <title>Reversible, calcium-dependent membrane association of human leukocyte 5-lipoxygenase.</title>
        <authorList>
            <person name="Rouzer C.A."/>
            <person name="Samuelsson B."/>
        </authorList>
    </citation>
    <scope>SUBCELLULAR LOCATION</scope>
</reference>
<reference key="11">
    <citation type="journal article" date="1991" name="J. Biol. Chem.">
        <title>Evaluation of the role of conserved His and Met residues among lipoxygenases by site-directed mutagenesis of recombinant human 5-lipoxygenase.</title>
        <authorList>
            <person name="Nguyen T."/>
            <person name="Falgueyret J.-P."/>
            <person name="Abramowitz M."/>
            <person name="Riendeau D."/>
        </authorList>
    </citation>
    <scope>MUTAGENESIS OF HIS-363; HIS-368; HIS-373; HIS-391 AND HIS-400</scope>
</reference>
<reference key="12">
    <citation type="journal article" date="1992" name="Biochem. Biophys. Res. Commun.">
        <title>Mutagenesis studies on the amino acid residues involved in the iron-binding and the activity of human 5-lipoxygenase.</title>
        <authorList>
            <person name="Ishii S."/>
            <person name="Noguchi M."/>
            <person name="Miyano M."/>
            <person name="Matsumoto T."/>
            <person name="Noma M."/>
        </authorList>
    </citation>
    <scope>MUTAGENESIS OF HIS-368; HIS-373; GLU-377; HIS-391; HIS-400 AND HIS-551</scope>
</reference>
<reference key="13">
    <citation type="journal article" date="1993" name="J. Exp. Med.">
        <title>5-lipoxygenase and 5-lipoxygenase-activating protein are localized in the nuclear envelope of activated human leukocytes.</title>
        <authorList>
            <person name="Woods J.W."/>
            <person name="Evans J.F."/>
            <person name="Ethier D."/>
            <person name="Scott S."/>
            <person name="Vickers P.J."/>
            <person name="Hearn L."/>
            <person name="Heibein J.A."/>
            <person name="Charleson S."/>
            <person name="Singer I.I."/>
        </authorList>
    </citation>
    <scope>SUBCELLULAR LOCATION</scope>
</reference>
<reference key="14">
    <citation type="journal article" date="1994" name="J. Biol. Chem.">
        <title>5-Lipoxygenase contains a functional Src homology 3-binding motif that interacts with the Src homology 3 domain of Grb2 and cytoskeletal proteins.</title>
        <authorList>
            <person name="Lepley R.A."/>
            <person name="Fitzpatrick F.A."/>
        </authorList>
    </citation>
    <scope>INTERACTION WITH GRB2</scope>
</reference>
<reference key="15">
    <citation type="journal article" date="1996" name="Biochem. J.">
        <title>The suppression of 5-lipoxygenation of arachidonic acid in human polymorphonuclear leucocytes by the 15-lipoxygenase product (15S)-hydroxy-(5Z,8Z,11Z,13E)-eicosatetraenoic acid: structure-activity relationship and mechanism of action.</title>
        <authorList>
            <person name="Petrich K."/>
            <person name="Ludwig P."/>
            <person name="Kuehn H."/>
            <person name="Schewe T."/>
        </authorList>
    </citation>
    <scope>CATALYTIC ACTIVITY</scope>
    <scope>FUNCTION</scope>
    <scope>ACTIVITY REGULATION</scope>
</reference>
<reference key="16">
    <citation type="journal article" date="1996" name="Eur. J. Biochem.">
        <title>Oxidative inactivation of human 5-lipoxygenase in phosphatidylcholine vesicles.</title>
        <authorList>
            <person name="De Carolis E."/>
            <person name="Denis D."/>
            <person name="Riendeau D."/>
        </authorList>
    </citation>
    <scope>CATALYTIC ACTIVITY</scope>
    <scope>FUNCTION</scope>
    <scope>ACTIVITY REGULATION</scope>
    <scope>BIOPHYSICOCHEMICAL PROPERTIES</scope>
</reference>
<reference key="17">
    <citation type="journal article" date="2002" name="J. Biol. Chem.">
        <title>Arachidonic acid promotes phosphorylation of 5-lipoxygenase at Ser-271 by MAPK-activated protein kinase 2 (MK2).</title>
        <authorList>
            <person name="Werz O."/>
            <person name="Szellas D."/>
            <person name="Steinhilber D."/>
            <person name="Radmark O."/>
        </authorList>
    </citation>
    <scope>PHOSPHORYLATION AT SER-272</scope>
</reference>
<reference key="18">
    <citation type="journal article" date="2004" name="J. Biol. Chem.">
        <title>Protein kinase A inhibits leukotriene synthesis by phosphorylation of 5-lipoxygenase on serine 523.</title>
        <authorList>
            <person name="Luo M."/>
            <person name="Jones S.M."/>
            <person name="Phare S.M."/>
            <person name="Coffey M.J."/>
            <person name="Peters-Golden M."/>
            <person name="Brock T.G."/>
        </authorList>
    </citation>
    <scope>PHOSPHORYLATION AT SER-524</scope>
    <scope>MUTAGENESIS OF SER-524</scope>
</reference>
<reference key="19">
    <citation type="journal article" date="2006" name="Chem. Biol.">
        <title>Resolvin E2: identification and anti-inflammatory actions: pivotal role of human 5-lipoxygenase in resolvin E series biosynthesis.</title>
        <authorList>
            <person name="Tjonahen E."/>
            <person name="Oh S.F."/>
            <person name="Siegelman J."/>
            <person name="Elangovan S."/>
            <person name="Percarpio K.B."/>
            <person name="Hong S."/>
            <person name="Arita M."/>
            <person name="Serhan C.N."/>
        </authorList>
    </citation>
    <scope>CATALYTIC ACTIVITY</scope>
    <scope>FUNCTION</scope>
</reference>
<reference key="20">
    <citation type="journal article" date="2006" name="J. Biol. Chem.">
        <title>Arachidonic acid regulates the translocation of 5-lipoxygenase to the nuclear membranes in human neutrophils.</title>
        <authorList>
            <person name="Flamand N."/>
            <person name="Lefebvre J."/>
            <person name="Surette M.E."/>
            <person name="Picard S."/>
            <person name="Borgeat P."/>
        </authorList>
    </citation>
    <scope>SUBCELLULAR LOCATION</scope>
</reference>
<reference key="21">
    <citation type="journal article" date="2009" name="Biochim. Biophys. Acta">
        <title>Human Dicer C-terminus functions as a 5-lipoxygenase binding domain.</title>
        <authorList>
            <person name="Dincbas-Renqvist V."/>
            <person name="Pepin G."/>
            <person name="Rakonjac M."/>
            <person name="Plante I."/>
            <person name="Ouellet D.L."/>
            <person name="Hermansson A."/>
            <person name="Goulet I."/>
            <person name="Doucet J."/>
            <person name="Samuelsson B."/>
            <person name="Raadmark O."/>
            <person name="Provost P."/>
        </authorList>
    </citation>
    <scope>INTERACTION WITH DICER1</scope>
    <scope>SUBCELLULAR LOCATION</scope>
    <scope>MUTAGENESIS OF TRP-14; TRP-76 AND TRP-103</scope>
    <scope>CATALYTIC ACTIVITY</scope>
    <scope>FUNCTION</scope>
</reference>
<reference key="22">
    <citation type="journal article" date="2009" name="Biochem. Biophys. Res. Commun.">
        <title>Distinct parts of leukotriene C(4) synthase interact with 5-lipoxygenase and 5-lipoxygenase activating protein.</title>
        <authorList>
            <person name="Strid T."/>
            <person name="Svartz J."/>
            <person name="Franck N."/>
            <person name="Hallin E."/>
            <person name="Ingelsson B."/>
            <person name="Soederstroem M."/>
            <person name="Hammarstroem S."/>
        </authorList>
    </citation>
    <scope>INTERACTION WITH ALOX5AP AND LTC4S</scope>
    <scope>SUBCELLULAR LOCATION</scope>
</reference>
<reference key="23">
    <citation type="journal article" date="2009" name="J. Biol. Chem.">
        <title>Phosphorylation of serine 271 on 5-lipoxygenase and its role in nuclear export.</title>
        <authorList>
            <person name="Flamand N."/>
            <person name="Luo M."/>
            <person name="Peters-Golden M."/>
            <person name="Brock T.G."/>
        </authorList>
    </citation>
    <scope>SUBCELLULAR LOCATION</scope>
    <scope>PHOSPHORYLATION AT SER-272</scope>
    <scope>MUTAGENESIS OF SER-272</scope>
</reference>
<reference key="24">
    <citation type="journal article" date="2010" name="Biochem. J.">
        <title>Coactosin-like protein functions as a stabilizing chaperone for 5-lipoxygenase: role of tryptophan 102.</title>
        <authorList>
            <person name="Esser J."/>
            <person name="Rakonjac M."/>
            <person name="Hofmann B."/>
            <person name="Fischer L."/>
            <person name="Provost P."/>
            <person name="Schneider G."/>
            <person name="Steinhilber D."/>
            <person name="Samuelsson B."/>
            <person name="Radmark O."/>
        </authorList>
    </citation>
    <scope>INTERACTION WITH COTL1</scope>
    <scope>MUTAGENESIS OF TRP-103</scope>
</reference>
<reference key="25">
    <citation type="journal article" date="2011" name="Exp. Mol. Med.">
        <title>Ligation of CD40 receptor in human B lymphocytes triggers the 5-lipoxygenase pathway to produce reactive oxygen species and activate p38 MAPK.</title>
        <authorList>
            <person name="Ha Y.J."/>
            <person name="Seul H.J."/>
            <person name="Lee J.R."/>
        </authorList>
    </citation>
    <scope>INTERACTION WITH PIK3R1</scope>
    <scope>FUNCTION</scope>
</reference>
<reference key="26">
    <citation type="journal article" date="2011" name="J. Clin. Invest.">
        <title>Pro-resolving actions and stereoselective biosynthesis of 18S E-series resolvins in human leukocytes and murine inflammation.</title>
        <authorList>
            <person name="Oh S.F."/>
            <person name="Pillai P.S."/>
            <person name="Recchiuti A."/>
            <person name="Yang R."/>
            <person name="Serhan C.N."/>
        </authorList>
    </citation>
    <scope>CATALYTIC ACTIVITY</scope>
    <scope>FUNCTION</scope>
</reference>
<reference key="27">
    <citation type="journal article" date="2013" name="Arch. Biochem. Biophys.">
        <title>Conversion of pro-inflammatory murine Alox5 into an anti-inflammatory 15S-lipoxygenating enzyme by multiple mutations of sequence determinants.</title>
        <authorList>
            <person name="Hofheinz K."/>
            <person name="Kakularam K.R."/>
            <person name="Adel S."/>
            <person name="Anton M."/>
            <person name="Polymarasetty A."/>
            <person name="Reddanna P."/>
            <person name="Kuhn H."/>
            <person name="Horn T."/>
        </authorList>
    </citation>
    <scope>CATALYTIC ACTIVITY</scope>
    <scope>FUNCTION</scope>
    <scope>MUTAGENESIS OF PHE-360; ALA-425; ASN-426 AND ALA-604</scope>
</reference>
<reference key="28">
    <citation type="journal article" date="2013" name="Redox Biol.">
        <title>Functional characterization of genetic enzyme variations in human lipoxygenases.</title>
        <authorList>
            <person name="Horn T."/>
            <person name="Reddy Kakularam K."/>
            <person name="Anton M."/>
            <person name="Richter C."/>
            <person name="Reddanna P."/>
            <person name="Kuhn H."/>
        </authorList>
    </citation>
    <scope>CATALYTIC ACTIVITY</scope>
    <scope>FUNCTION</scope>
    <scope>VARIANTS LYS-254; SER-337; SER-447; VAL-549; LEU-577; MET-591 AND GLN-656</scope>
    <scope>CHARACTERIZATION OF VARIANTS LYS-254; SER-337; SER-447; VAL-549; LEU-577; MET-591 AND GLN-656</scope>
</reference>
<reference key="29">
    <citation type="journal article" date="2014" name="Biochemistry">
        <title>ATP allosterically activates the human 5-lipoxygenase molecular mechanism of arachidonic acid and 5(S)-hydroperoxy-6(E),8(Z),11(Z),14(Z)-eicosatetraenoic acid.</title>
        <authorList>
            <person name="Smyrniotis C.J."/>
            <person name="Barbour S.R."/>
            <person name="Xia Z."/>
            <person name="Hixon M.S."/>
            <person name="Holman T.R."/>
        </authorList>
    </citation>
    <scope>CATALYTIC ACTIVITY</scope>
    <scope>FUNCTION</scope>
    <scope>INDUCTION</scope>
    <scope>BIOPHYSICOCHEMICAL PROPERTIES</scope>
</reference>
<reference key="30">
    <citation type="journal article" date="2015" name="Prostaglandins Leukot. Essent. Fatty Acids">
        <title>Phosphorylation of serine 523 on 5-lipoxygenase in human B lymphocytes.</title>
        <authorList>
            <person name="Mahshid Y."/>
            <person name="Markoutsa S."/>
            <person name="Dincbas-Renqvist V."/>
            <person name="Sueruen D."/>
            <person name="Christensson B."/>
            <person name="Sander B."/>
            <person name="Bjoerkholm M."/>
            <person name="Sorg B.L."/>
            <person name="Raadmark O."/>
            <person name="Claesson H.E."/>
        </authorList>
    </citation>
    <scope>PHOSPHORYLATION AT SER-524</scope>
</reference>
<reference key="31">
    <citation type="journal article" date="2019" name="ACS Chem. Biol.">
        <title>Mutations of Triad Determinants Changes the Substrate Alignment at the Catalytic Center of Human ALOX5.</title>
        <authorList>
            <person name="Ivanov I."/>
            <person name="Golovanov A.B."/>
            <person name="Ferretti C."/>
            <person name="Canyelles-Nino M."/>
            <person name="Heydeck D."/>
            <person name="Stehling S."/>
            <person name="Lluch J.M."/>
            <person name="Gonzalez-Lafont A."/>
            <person name="Kuehn H."/>
        </authorList>
    </citation>
    <scope>MUTAGENESIS OF PHE-360; ALA-425; ASN-426 AND ALA-604</scope>
    <scope>CATALYTIC ACTIVITY</scope>
    <scope>FUNCTION</scope>
</reference>
<reference evidence="41" key="32">
    <citation type="journal article" date="2011" name="Science">
        <title>The structure of human 5-lipoxygenase.</title>
        <authorList>
            <person name="Gilbert N.C."/>
            <person name="Bartlett S.G."/>
            <person name="Waight M.T."/>
            <person name="Neau D.B."/>
            <person name="Boeglin W.E."/>
            <person name="Brash A.R."/>
            <person name="Newcomer M.E."/>
        </authorList>
    </citation>
    <scope>X-RAY CRYSTALLOGRAPHY (2.4 ANGSTROMS) IN COMPLEX WITH IRON ION</scope>
    <scope>COFACTOR</scope>
    <scope>CATALYTIC ACTIVITY</scope>
    <scope>FUNCTION</scope>
    <scope>SUBUNIT</scope>
</reference>
<reference evidence="42 43 44" key="33">
    <citation type="journal article" date="2012" name="FASEB J.">
        <title>Conversion of human 5-lipoxygenase to a 15-lipoxygenase by a point mutation to mimic phosphorylation at Serine-663.</title>
        <authorList>
            <person name="Gilbert N.C."/>
            <person name="Rui Z."/>
            <person name="Neau D.B."/>
            <person name="Waight M.T."/>
            <person name="Bartlett S.G."/>
            <person name="Boeglin W.E."/>
            <person name="Brash A.R."/>
            <person name="Newcomer M.E."/>
        </authorList>
    </citation>
    <scope>X-RAY CRYSTALLOGRAPHY (2.07 ANGSTROMS) IN COMPLEX WITH IRON ION AND ARACHIDONIC ACID</scope>
    <scope>SUBUNIT</scope>
    <scope>MUTAGENESIS OF SER-664</scope>
    <scope>BIOPHYSICOCHEMICAL PROPERTIES</scope>
    <scope>CATALYTIC ACTIVITY</scope>
    <scope>FUNCTION</scope>
</reference>
<reference key="34">
    <citation type="journal article" date="2020" name="J. Lipid Res.">
        <title>15-Lipoxygenase-1 biosynthesis of 7S,14S-diHDHA implicates 15-lipoxygenase-2 in biosynthesis of resolvin D5.</title>
        <authorList>
            <person name="Perry S.C."/>
            <person name="Kalyanaraman C."/>
            <person name="Tourdot B.E."/>
            <person name="Conrad W.S."/>
            <person name="Akinkugbe O."/>
            <person name="Freedman J.C."/>
            <person name="Holinstat M."/>
            <person name="Jacobson M.P."/>
            <person name="Holman T.R."/>
        </authorList>
    </citation>
    <scope>FUNCTION</scope>
    <scope>CATALYTIC ACTIVITY</scope>
</reference>
<reference key="35">
    <citation type="journal article" date="2004" name="Carcinogenesis">
        <title>Arachidonate lipoxygenase (ALOX) and cyclooxygenase (COX) polymorphisms and colon cancer risk.</title>
        <authorList>
            <person name="Goodman J.E."/>
            <person name="Bowman E.D."/>
            <person name="Chanock S.J."/>
            <person name="Alberg A.J."/>
            <person name="Harris C.C."/>
        </authorList>
    </citation>
    <scope>VARIANT LYS-254</scope>
</reference>
<proteinExistence type="evidence at protein level"/>
<name>LOX5_HUMAN</name>
<comment type="function">
    <text evidence="2 10 12 16 17 18 19 20 21 22 25 26 28 29">Catalyzes the oxygenation of arachidonate ((5Z,8Z,11Z,14Z)-eicosatetraenoate) to 5-hydroperoxyeicosatetraenoate (5-HPETE) followed by the dehydration to 5,6- epoxyeicosatetraenoate (Leukotriene A4/LTA4), the first two steps in the biosynthesis of leukotrienes, which are potent mediators of inflammation (PubMed:19022417, PubMed:21233389, PubMed:22516296, PubMed:23246375, PubMed:24282679, PubMed:24893149, PubMed:31664810, PubMed:8615788, PubMed:8631361). Also catalyzes the oxygenation of arachidonate into 8-hydroperoxyicosatetraenoate (8-HPETE) and 12-hydroperoxyicosatetraenoate (12-HPETE) (PubMed:23246375). Displays lipoxin synthase activity being able to convert (15S)-HETE into a conjugate tetraene (PubMed:31664810). Although arachidonate is the preferred substrate, this enzyme can also metabolize oxidized fatty acids derived from arachidonate such as (15S)-HETE, eicosapentaenoate (EPA) such as (18R)- and (18S)-HEPE or docosahexaenoate (DHA) which lead to the formation of specialized pro-resolving mediators (SPM) lipoxin and resolvins E and D respectively, therefore it participates in anti-inflammatory responses (PubMed:17114001, PubMed:21206090, PubMed:31664810, PubMed:32404334, PubMed:8615788). Oxidation of DHA directly inhibits endothelial cell proliferation and sprouting angiogenesis via peroxisome proliferator-activated receptor gamma (PPARgamma) (By similarity). It does not catalyze the oxygenation of linoleic acid and does not convert (5S)-HETE to lipoxin isomers (PubMed:31664810). In addition to inflammatory processes, it participates in dendritic cell migration, wound healing through an antioxidant mechanism based on heme oxygenase-1 (HO-1) regulation expression, monocyte adhesion to the endothelium via ITGAM expression on monocytes (By similarity). Moreover, it helps establish an adaptive humoral immunity by regulating primary resting B cells and follicular helper T cells and participates in the CD40-induced production of reactive oxygen species (ROS) after CD40 ligation in B cells through interaction with PIK3R1 that bridges ALOX5 with CD40 (PubMed:21200133). May also play a role in glucose homeostasis, regulation of insulin secretion and palmitic acid-induced insulin resistance via AMPK (By similarity). Can regulate bone mineralization and fat cell differentiation increases in induced pluripotent stem cells (By similarity).</text>
</comment>
<comment type="catalytic activity">
    <reaction evidence="12 18">
        <text>(5Z,8Z,11Z,14Z)-eicosatetraenoate + O2 = leukotriene A4 + H2O</text>
        <dbReference type="Rhea" id="RHEA:32307"/>
        <dbReference type="ChEBI" id="CHEBI:15377"/>
        <dbReference type="ChEBI" id="CHEBI:15379"/>
        <dbReference type="ChEBI" id="CHEBI:32395"/>
        <dbReference type="ChEBI" id="CHEBI:57463"/>
        <dbReference type="EC" id="1.13.11.34"/>
    </reaction>
    <physiologicalReaction direction="left-to-right" evidence="18">
        <dbReference type="Rhea" id="RHEA:32308"/>
    </physiologicalReaction>
</comment>
<comment type="catalytic activity">
    <reaction evidence="10">
        <text>18-HEPE + O2 = (5S)-hydroperoxy-18-hydroxy-(7E,9E,11Z,14Z,16E)-eicosapentaenoate</text>
        <dbReference type="Rhea" id="RHEA:48860"/>
        <dbReference type="ChEBI" id="CHEBI:15379"/>
        <dbReference type="ChEBI" id="CHEBI:90825"/>
        <dbReference type="ChEBI" id="CHEBI:90826"/>
    </reaction>
    <physiologicalReaction direction="left-to-right" evidence="34">
        <dbReference type="Rhea" id="RHEA:48861"/>
    </physiologicalReaction>
</comment>
<comment type="catalytic activity">
    <reaction evidence="17">
        <text>(18R)-hydroxy-(5Z,8Z,11Z,14Z,16E)-eicosapentaenoate + O2 = (5S)-hydroperoxy-(18R)-hydroxy-(6E,8Z,11Z,14Z,16E)-eicosapentaenoate</text>
        <dbReference type="Rhea" id="RHEA:51968"/>
        <dbReference type="ChEBI" id="CHEBI:15379"/>
        <dbReference type="ChEBI" id="CHEBI:90818"/>
        <dbReference type="ChEBI" id="CHEBI:132218"/>
    </reaction>
    <physiologicalReaction direction="left-to-right" evidence="35">
        <dbReference type="Rhea" id="RHEA:51969"/>
    </physiologicalReaction>
</comment>
<comment type="catalytic activity">
    <reaction evidence="17">
        <text>(18S)-hydroxy-(5Z,8Z,11Z,14Z,16E)-eicosapentaenoate + O2 = (5S)-hydroperoxy-(18S)-hydroxy-(6E,8Z,11Z,14Z,16E)-eicosapentaenoate</text>
        <dbReference type="Rhea" id="RHEA:50204"/>
        <dbReference type="ChEBI" id="CHEBI:15379"/>
        <dbReference type="ChEBI" id="CHEBI:132083"/>
        <dbReference type="ChEBI" id="CHEBI:132091"/>
    </reaction>
    <physiologicalReaction direction="left-to-right" evidence="35">
        <dbReference type="Rhea" id="RHEA:50205"/>
    </physiologicalReaction>
</comment>
<comment type="catalytic activity">
    <reaction evidence="17">
        <text>(5S)-hydroperoxy-(18S)-hydroxy-(6E,8Z,11Z,14Z,16E)-eicosapentaenoate = (5S,6S)-epoxy-(18S)-hydroxy-(7E,9E,11Z,14Z,16E)-eicosapentaenoate + H2O</text>
        <dbReference type="Rhea" id="RHEA:39107"/>
        <dbReference type="ChEBI" id="CHEBI:15377"/>
        <dbReference type="ChEBI" id="CHEBI:132091"/>
        <dbReference type="ChEBI" id="CHEBI:134661"/>
    </reaction>
    <physiologicalReaction direction="left-to-right" evidence="35">
        <dbReference type="Rhea" id="RHEA:39108"/>
    </physiologicalReaction>
</comment>
<comment type="catalytic activity">
    <reaction evidence="17 34">
        <text>(5S)-hydroperoxy-(18R)-hydroxy-(6E,8Z,11Z,14Z,16E)-eicosapentaenoate = (5S,6S)-epoxy-(18R)-hydroxy-(7E,9E,11Z,14Z,16E)-eicosapentaenoate + H2O</text>
        <dbReference type="Rhea" id="RHEA:50268"/>
        <dbReference type="ChEBI" id="CHEBI:15377"/>
        <dbReference type="ChEBI" id="CHEBI:132218"/>
        <dbReference type="ChEBI" id="CHEBI:132219"/>
    </reaction>
    <physiologicalReaction direction="left-to-right" evidence="35">
        <dbReference type="Rhea" id="RHEA:50269"/>
    </physiologicalReaction>
</comment>
<comment type="catalytic activity">
    <reaction evidence="10">
        <text>(5S)-hydroperoxy-18-hydroxy-(7E,9E,11Z,14Z,16E)-eicosapentaenoate = (5S,6S)-epoxy-18-hydroxy-(7E,9E,11Z,14Z,16E)-eicosapentaenoate + H2O</text>
        <dbReference type="Rhea" id="RHEA:50844"/>
        <dbReference type="ChEBI" id="CHEBI:15377"/>
        <dbReference type="ChEBI" id="CHEBI:90826"/>
        <dbReference type="ChEBI" id="CHEBI:133812"/>
    </reaction>
    <physiologicalReaction direction="left-to-right" evidence="34">
        <dbReference type="Rhea" id="RHEA:50845"/>
    </physiologicalReaction>
</comment>
<comment type="catalytic activity">
    <reaction evidence="12 19 20 21 22 28 29">
        <text>(5Z,8Z,11Z,14Z)-eicosatetraenoate + O2 = (5S)-hydroperoxy-(6E,8Z,11Z,14Z)-eicosatetraenoate</text>
        <dbReference type="Rhea" id="RHEA:17485"/>
        <dbReference type="ChEBI" id="CHEBI:15379"/>
        <dbReference type="ChEBI" id="CHEBI:32395"/>
        <dbReference type="ChEBI" id="CHEBI:57450"/>
    </reaction>
    <physiologicalReaction direction="left-to-right" evidence="39">
        <dbReference type="Rhea" id="RHEA:17486"/>
    </physiologicalReaction>
</comment>
<comment type="catalytic activity">
    <reaction evidence="25 28">
        <text>(15S)-hydroxy-(5Z,8Z,11Z,13E)-eicosatetraenoate + O2 = (5S)-hydroperoxy-(15S)-hydroxy-(6E,8Z,11Z,13E)-eicosatetraenoate</text>
        <dbReference type="Rhea" id="RHEA:48624"/>
        <dbReference type="ChEBI" id="CHEBI:15379"/>
        <dbReference type="ChEBI" id="CHEBI:57409"/>
        <dbReference type="ChEBI" id="CHEBI:131564"/>
    </reaction>
    <physiologicalReaction direction="left-to-right" evidence="28">
        <dbReference type="Rhea" id="RHEA:48625"/>
    </physiologicalReaction>
</comment>
<comment type="catalytic activity">
    <reaction evidence="21 22 29">
        <text>(5S)-hydroperoxy-(6E,8Z,11Z,14Z)-eicosatetraenoate = leukotriene A4 + H2O</text>
        <dbReference type="Rhea" id="RHEA:17961"/>
        <dbReference type="ChEBI" id="CHEBI:15377"/>
        <dbReference type="ChEBI" id="CHEBI:57450"/>
        <dbReference type="ChEBI" id="CHEBI:57463"/>
    </reaction>
    <physiologicalReaction direction="left-to-right" evidence="39">
        <dbReference type="Rhea" id="RHEA:17962"/>
    </physiologicalReaction>
</comment>
<comment type="catalytic activity">
    <reaction evidence="20">
        <text>(5Z,8Z,11Z,14Z)-eicosatetraenoate + O2 = (8S)-hydroperoxy-(5Z,9E,11Z,14Z)-eicosatetraenoate</text>
        <dbReference type="Rhea" id="RHEA:38675"/>
        <dbReference type="ChEBI" id="CHEBI:15379"/>
        <dbReference type="ChEBI" id="CHEBI:32395"/>
        <dbReference type="ChEBI" id="CHEBI:75322"/>
    </reaction>
    <physiologicalReaction direction="left-to-right" evidence="36">
        <dbReference type="Rhea" id="RHEA:38676"/>
    </physiologicalReaction>
</comment>
<comment type="catalytic activity">
    <reaction evidence="20">
        <text>(5Z,8Z,11Z,14Z)-eicosatetraenoate + O2 = (12S)-hydroperoxy-(5Z,8Z,10E,14Z)-eicosatetraenoate</text>
        <dbReference type="Rhea" id="RHEA:10428"/>
        <dbReference type="ChEBI" id="CHEBI:15379"/>
        <dbReference type="ChEBI" id="CHEBI:32395"/>
        <dbReference type="ChEBI" id="CHEBI:57444"/>
    </reaction>
    <physiologicalReaction direction="left-to-right" evidence="36">
        <dbReference type="Rhea" id="RHEA:10429"/>
    </physiologicalReaction>
</comment>
<comment type="catalytic activity">
    <reaction evidence="39">
        <text>(5Z,8Z)-eicosadienoate + O2 = (5S)-hydroperoxy-(6E,8Z)-eicosadienoate</text>
        <dbReference type="Rhea" id="RHEA:62644"/>
        <dbReference type="ChEBI" id="CHEBI:15379"/>
        <dbReference type="ChEBI" id="CHEBI:145835"/>
        <dbReference type="ChEBI" id="CHEBI:145836"/>
    </reaction>
</comment>
<comment type="catalytic activity">
    <reaction evidence="39">
        <text>(12S)-hydroxy-(5Z,8Z,10E,14Z)-eicosatetraenoate + O2 = (5S)-hydroperoxy-(12S)-hydroxy-(6E,8Z,10E,14Z)-eicosatetraenoate</text>
        <dbReference type="Rhea" id="RHEA:62648"/>
        <dbReference type="ChEBI" id="CHEBI:15379"/>
        <dbReference type="ChEBI" id="CHEBI:90680"/>
        <dbReference type="ChEBI" id="CHEBI:145837"/>
    </reaction>
</comment>
<comment type="catalytic activity">
    <reaction evidence="25">
        <text>(5Z,8Z,11Z,14Z,17Z)-eicosapentaenoate + O2 = 5-hydroperoxy-(6E,8Z,11Z,14Z,17Z)-eicosapentaenoate</text>
        <dbReference type="Rhea" id="RHEA:62600"/>
        <dbReference type="ChEBI" id="CHEBI:15379"/>
        <dbReference type="ChEBI" id="CHEBI:58562"/>
        <dbReference type="ChEBI" id="CHEBI:145815"/>
    </reaction>
    <physiologicalReaction direction="left-to-right" evidence="37">
        <dbReference type="Rhea" id="RHEA:62601"/>
    </physiologicalReaction>
</comment>
<comment type="catalytic activity">
    <reaction evidence="26">
        <text>(4Z,7Z,10Z,13Z,16Z,19Z)-docosahexaenoate + O2 = (14S)-hydroperoxy-(4Z,7Z,10Z,12E,16Z,19Z)-docosahexaenoate</text>
        <dbReference type="Rhea" id="RHEA:41332"/>
        <dbReference type="ChEBI" id="CHEBI:15379"/>
        <dbReference type="ChEBI" id="CHEBI:77016"/>
        <dbReference type="ChEBI" id="CHEBI:78048"/>
    </reaction>
    <physiologicalReaction direction="left-to-right" evidence="38">
        <dbReference type="Rhea" id="RHEA:41333"/>
    </physiologicalReaction>
</comment>
<comment type="catalytic activity">
    <reaction evidence="26 37">
        <text>(4Z,7Z,10Z,13Z,16Z,19Z)-docosahexaenoate + O2 = (7S)-hydroperoxy-(4Z,8E,10Z,13Z,16Z,19Z)-docosahexaenoate</text>
        <dbReference type="Rhea" id="RHEA:64668"/>
        <dbReference type="ChEBI" id="CHEBI:15379"/>
        <dbReference type="ChEBI" id="CHEBI:77016"/>
        <dbReference type="ChEBI" id="CHEBI:156049"/>
    </reaction>
    <physiologicalReaction direction="left-to-right" evidence="37 38">
        <dbReference type="Rhea" id="RHEA:64669"/>
    </physiologicalReaction>
</comment>
<comment type="catalytic activity">
    <reaction evidence="26">
        <text>(4Z,7Z,10Z,13Z,16Z,19Z)-docosahexaenoate + O2 = (17S)-hydroperoxy-(4Z,7Z,10Z,13Z,15E,19Z)-docosahexaenoate</text>
        <dbReference type="Rhea" id="RHEA:50840"/>
        <dbReference type="ChEBI" id="CHEBI:15379"/>
        <dbReference type="ChEBI" id="CHEBI:77016"/>
        <dbReference type="ChEBI" id="CHEBI:133795"/>
    </reaction>
    <physiologicalReaction direction="left-to-right" evidence="38">
        <dbReference type="Rhea" id="RHEA:50841"/>
    </physiologicalReaction>
</comment>
<comment type="cofactor">
    <cofactor evidence="4 18">
        <name>Fe cation</name>
        <dbReference type="ChEBI" id="CHEBI:24875"/>
    </cofactor>
    <text evidence="4 18">Binds 1 Fe cation per subunit.</text>
</comment>
<comment type="activity regulation">
    <text evidence="22 28 29">Undergoes a sequential loss of the oxygenase and pseudoperoxidase activities which is dependent on the structural characteristics of the substrate for the reaction, on oxygen concentration and on exposure to phospholipids and calcium (PubMed:8631361). 15-HETE and other 15-mono-hydroxyeicosanoids exhibit the highest inhibitory potencies in their capability of suppressing 5-lipoxygenation of arachidonic acid, whereas the other HETEs, (5S,15S)-dihydroxy-(6E,8Z,11Z,13E)-eicosatetraenoic acid (5,15-diHETE) as well as octadecanoids, are modest or poor inhibitors (PubMed:8615788). The formation of (5S)-hydroperoxy-(15S)-hydroxy-(6E,8Z,11Z,13E)-eicosatetraenoate is strongly stimulated by either hydroperoxypolyenoic fatty acids or arachidonic acid (PubMed:8615788). Arachidonate 5-lipoxygenase and leukotriene A4 synthase activities are allosterically increased by ATP (PubMed:24893149).</text>
</comment>
<comment type="biophysicochemical properties">
    <kinetics>
        <KM evidence="29">13 uM for (5S)-hydroperoxy-(6E,8Z,11Z,14Z)-eicosatetraenoate</KM>
        <KM evidence="19">11 uM for arachidonic acid</KM>
        <KM evidence="22">1.9 uM for arachidonic acid</KM>
        <KM evidence="22">14 uM for (5S)-hydroperoxy-(6E,8Z,11Z,14Z)-eicosatetraenoate</KM>
        <KM evidence="22">5.3 uM for arachidonic acid (in the presence of 200 uM ATP)</KM>
        <KM evidence="22">19 uM for (5S)-hydroperoxy-(6E,8Z,11Z,14Z)-eicosatetraenoate (in the presence of 200 uM ATP)</KM>
        <KM evidence="22">1.6 uM for (5S)-hydroperoxy-(6E,8Z,11Z,14Z)-eicosatetraenoate (generated in situ from arachidonic acid)</KM>
        <KM evidence="22">4.5 uM for (5S)-hydroperoxy-(6E,8Z,11Z,14Z)-eicosatetraenoate (generated in situ from arachidonic acid in the presence of 200 uM ATP)</KM>
        <Vmax evidence="22">1.0 umol/min/mg enzyme toward arachidonic acid</Vmax>
        <Vmax evidence="22">0.33 umol/min/mg enzyme toward (5S)-hydroperoxy-(6E,8Z,11Z,14Z)-eicosatetraenoate</Vmax>
        <Vmax evidence="22">4.9 umol/min/mg enzyme toward arachidonic acid (in the presence of 200 uM ATP)</Vmax>
        <Vmax evidence="22">1.6 umol/min/mg enzyme toward (5S)-hydroperoxy-(6E,8Z,11Z,14Z)-eicosatetraenoate (in the presence of 200 uM ATP)</Vmax>
        <Vmax evidence="22">0.1 umol/min/mg enzyme toward (5S)-hydroperoxy-(6E,8Z,11Z,14Z)-eicosatetraenoate (generated in situ from arachidonic acid)</Vmax>
        <Vmax evidence="22">2.0 umol/min/mg enzyme toward (5S)-hydroperoxy-(6E,8Z,11Z,14Z)-eicosatetraenoate (generated in situ from arachidonic acid in the presence of 200 uM ATP)</Vmax>
    </kinetics>
</comment>
<comment type="pathway">
    <text evidence="29">Lipid metabolism; leukotriene A4 biosynthesis.</text>
</comment>
<comment type="subunit">
    <text evidence="12 13 15 16 18 19">Homodimer (PubMed:21233389, PubMed:22516296). Interacts with ALOX5AP and LTC4S (PubMed:19233132). Interacts with COTL1, the interaction is required for stability and efficient catalytic activity (PubMed:19807693). Interacts with PIK3R1; this interaction bridges ALOX5 with CD40 after CD40 ligation in B cells and leads to the production of reactive oxygen species (ROS) (PubMed:21200133). Interacts (via PLAT domain) with DICER1 (via Dicer dsRNA-binding fold domain); this interaction enhances arachidonate 5-lipoxygenase activity and modifies the miRNA precursor processing activity of DICER1 (PubMed:19022417).</text>
</comment>
<comment type="interaction">
    <interactant intactId="EBI-79934">
        <id>P09917</id>
    </interactant>
    <interactant intactId="EBI-13381098">
        <id>Q8IYJ2-2</id>
        <label>C10orf67</label>
    </interactant>
    <organismsDiffer>false</organismsDiffer>
    <experiments>3</experiments>
</comment>
<comment type="interaction">
    <interactant intactId="EBI-79934">
        <id>P09917</id>
    </interactant>
    <interactant intactId="EBI-747830">
        <id>Q6PII3</id>
        <label>CCDC174</label>
    </interactant>
    <organismsDiffer>false</organismsDiffer>
    <experiments>3</experiments>
</comment>
<comment type="interaction">
    <interactant intactId="EBI-79934">
        <id>P09917</id>
    </interactant>
    <interactant intactId="EBI-12696312">
        <id>Q6P2R3</id>
        <label>CEP57L1</label>
    </interactant>
    <organismsDiffer>false</organismsDiffer>
    <experiments>3</experiments>
</comment>
<comment type="interaction">
    <interactant intactId="EBI-79934">
        <id>P09917</id>
    </interactant>
    <interactant intactId="EBI-10181988">
        <id>Q8IYX8-2</id>
        <label>CEP57L1</label>
    </interactant>
    <organismsDiffer>false</organismsDiffer>
    <experiments>3</experiments>
</comment>
<comment type="interaction">
    <interactant intactId="EBI-79934">
        <id>P09917</id>
    </interactant>
    <interactant intactId="EBI-741977">
        <id>Q96MT8</id>
        <label>CEP63</label>
    </interactant>
    <organismsDiffer>false</organismsDiffer>
    <experiments>4</experiments>
</comment>
<comment type="interaction">
    <interactant intactId="EBI-79934">
        <id>P09917</id>
    </interactant>
    <interactant intactId="EBI-11522539">
        <id>Q96MT8-3</id>
        <label>CEP63</label>
    </interactant>
    <organismsDiffer>false</organismsDiffer>
    <experiments>8</experiments>
</comment>
<comment type="interaction">
    <interactant intactId="EBI-79934">
        <id>P09917</id>
    </interactant>
    <interactant intactId="EBI-79926">
        <id>Q14019</id>
        <label>COTL1</label>
    </interactant>
    <organismsDiffer>false</organismsDiffer>
    <experiments>5</experiments>
</comment>
<comment type="interaction">
    <interactant intactId="EBI-79934">
        <id>P09917</id>
    </interactant>
    <interactant intactId="EBI-1383732">
        <id>P09769</id>
        <label>FGR</label>
    </interactant>
    <organismsDiffer>false</organismsDiffer>
    <experiments>2</experiments>
</comment>
<comment type="interaction">
    <interactant intactId="EBI-79934">
        <id>P09917</id>
    </interactant>
    <interactant intactId="EBI-6929453">
        <id>O43716</id>
        <label>GATC</label>
    </interactant>
    <organismsDiffer>false</organismsDiffer>
    <experiments>6</experiments>
</comment>
<comment type="interaction">
    <interactant intactId="EBI-79934">
        <id>P09917</id>
    </interactant>
    <interactant intactId="EBI-346340">
        <id>P08631</id>
        <label>HCK</label>
    </interactant>
    <organismsDiffer>false</organismsDiffer>
    <experiments>2</experiments>
</comment>
<comment type="interaction">
    <interactant intactId="EBI-79934">
        <id>P09917</id>
    </interactant>
    <interactant intactId="EBI-10196655">
        <id>Q6UWX4</id>
        <label>HHIPL2</label>
    </interactant>
    <organismsDiffer>false</organismsDiffer>
    <experiments>6</experiments>
</comment>
<comment type="interaction">
    <interactant intactId="EBI-79934">
        <id>P09917</id>
    </interactant>
    <interactant intactId="EBI-12867244">
        <id>P14061</id>
        <label>HSD17B1</label>
    </interactant>
    <organismsDiffer>false</organismsDiffer>
    <experiments>3</experiments>
</comment>
<comment type="interaction">
    <interactant intactId="EBI-79934">
        <id>P09917</id>
    </interactant>
    <interactant intactId="EBI-1052433">
        <id>P31025</id>
        <label>LCN1</label>
    </interactant>
    <organismsDiffer>false</organismsDiffer>
    <experiments>3</experiments>
</comment>
<comment type="interaction">
    <interactant intactId="EBI-79934">
        <id>P09917</id>
    </interactant>
    <interactant intactId="EBI-742610">
        <id>Q9Y6D9</id>
        <label>MAD1L1</label>
    </interactant>
    <organismsDiffer>false</organismsDiffer>
    <experiments>9</experiments>
</comment>
<comment type="interaction">
    <interactant intactId="EBI-79934">
        <id>P09917</id>
    </interactant>
    <interactant intactId="EBI-2864512">
        <id>P50221</id>
        <label>MEOX1</label>
    </interactant>
    <organismsDiffer>false</organismsDiffer>
    <experiments>3</experiments>
</comment>
<comment type="interaction">
    <interactant intactId="EBI-79934">
        <id>P09917</id>
    </interactant>
    <interactant intactId="EBI-16439278">
        <id>Q6FHY5</id>
        <label>MEOX2</label>
    </interactant>
    <organismsDiffer>false</organismsDiffer>
    <experiments>3</experiments>
</comment>
<comment type="interaction">
    <interactant intactId="EBI-79934">
        <id>P09917</id>
    </interactant>
    <interactant intactId="EBI-10178410">
        <id>Q86Y26</id>
        <label>NUTM1</label>
    </interactant>
    <organismsDiffer>false</organismsDiffer>
    <experiments>4</experiments>
</comment>
<comment type="interaction">
    <interactant intactId="EBI-79934">
        <id>P09917</id>
    </interactant>
    <interactant intactId="EBI-18583589">
        <id>A6NGQ2</id>
        <label>OOEP</label>
    </interactant>
    <organismsDiffer>false</organismsDiffer>
    <experiments>3</experiments>
</comment>
<comment type="interaction">
    <interactant intactId="EBI-79934">
        <id>P09917</id>
    </interactant>
    <interactant intactId="EBI-476586">
        <id>P17612</id>
        <label>PRKACA</label>
    </interactant>
    <organismsDiffer>false</organismsDiffer>
    <experiments>2</experiments>
</comment>
<comment type="interaction">
    <interactant intactId="EBI-79934">
        <id>P09917</id>
    </interactant>
    <interactant intactId="EBI-307352">
        <id>Q04864</id>
        <label>REL</label>
    </interactant>
    <organismsDiffer>false</organismsDiffer>
    <experiments>3</experiments>
</comment>
<comment type="interaction">
    <interactant intactId="EBI-79934">
        <id>P09917</id>
    </interactant>
    <interactant intactId="EBI-5235340">
        <id>Q7Z699</id>
        <label>SPRED1</label>
    </interactant>
    <organismsDiffer>false</organismsDiffer>
    <experiments>3</experiments>
</comment>
<comment type="interaction">
    <interactant intactId="EBI-79934">
        <id>P09917</id>
    </interactant>
    <interactant intactId="EBI-6872807">
        <id>Q8N0S2</id>
        <label>SYCE1</label>
    </interactant>
    <organismsDiffer>false</organismsDiffer>
    <experiments>6</experiments>
</comment>
<comment type="interaction">
    <interactant intactId="EBI-79934">
        <id>P09917</id>
    </interactant>
    <interactant intactId="EBI-3258000">
        <id>Q9P0N9</id>
        <label>TBC1D7</label>
    </interactant>
    <organismsDiffer>false</organismsDiffer>
    <experiments>3</experiments>
</comment>
<comment type="interaction">
    <interactant intactId="EBI-79934">
        <id>P09917</id>
    </interactant>
    <interactant intactId="EBI-515331">
        <id>P07947</id>
        <label>YES1</label>
    </interactant>
    <organismsDiffer>false</organismsDiffer>
    <experiments>2</experiments>
</comment>
<comment type="subcellular location">
    <subcellularLocation>
        <location evidence="2 11">Cytoplasm</location>
    </subcellularLocation>
    <subcellularLocation>
        <location evidence="13">Nucleus matrix</location>
    </subcellularLocation>
    <subcellularLocation>
        <location evidence="9">Nucleus membrane</location>
        <topology evidence="9">Peripheral membrane protein</topology>
    </subcellularLocation>
    <subcellularLocation>
        <location evidence="12">Cytoplasm</location>
        <location evidence="12">Perinuclear region</location>
    </subcellularLocation>
    <subcellularLocation>
        <location evidence="13">Cytoplasm</location>
        <location evidence="13">Cytosol</location>
    </subcellularLocation>
    <subcellularLocation>
        <location evidence="9 13 27">Nucleus envelope</location>
    </subcellularLocation>
    <subcellularLocation>
        <location evidence="27">Nucleus intermembrane space</location>
    </subcellularLocation>
    <text evidence="9 11 13 24 27">Shuttles between cytoplasm and nucleus (PubMed:19233132). Found exclusively in the nucleus, when phosphorylated on Ser-272 (PubMed:18978352). Calcium binding promotes translocation from the cytosol and the nuclear matrix to the nuclear envelope and membrane association (PubMed:16275640, PubMed:19233132, PubMed:3118366, PubMed:8245774).</text>
</comment>
<comment type="alternative products">
    <event type="alternative splicing"/>
    <isoform>
        <id>P09917-1</id>
        <name>1</name>
        <sequence type="displayed"/>
    </isoform>
    <isoform>
        <id>P09917-2</id>
        <name>2</name>
        <name>Delta-13</name>
        <sequence type="described" ref="VSP_046998"/>
    </isoform>
    <isoform>
        <id>P09917-3</id>
        <name>3</name>
        <name>delta-p10</name>
        <sequence type="described" ref="VSP_053534"/>
    </isoform>
    <isoform>
        <id>P09917-4</id>
        <name>4</name>
        <name>delta-10-13</name>
        <sequence type="described" ref="VSP_053535 VSP_053537"/>
    </isoform>
    <isoform>
        <id>P09917-5</id>
        <name>5</name>
        <name>alpha-10</name>
        <sequence type="described" ref="VSP_053536"/>
    </isoform>
    <text>Additional isoforms seem to exist.</text>
</comment>
<comment type="PTM">
    <text evidence="5 6 11 23">Serine phosphorylation by MAPKAPK2 is stimulated by arachidonic acid (PubMed:11844797, PubMed:18978352). Phosphorylation on Ser-524 by PKA has an inhibitory effect (PubMed:15280375). Phosphorylation on Ser-272 prevents export from the nucleus (PubMed:11844797, PubMed:18978352). Phosphorylation at Ser-524 is stimulated by 8-bromo-3',5'-cyclic AMP or prostaglandin E2 (PubMed:26210919).</text>
</comment>
<comment type="similarity">
    <text evidence="33">Belongs to the lipoxygenase family.</text>
</comment>
<comment type="online information" name="Atlas of Genetics and Cytogenetics in Oncology and Haematology">
    <link uri="https://atlasgeneticsoncology.org/gene/42985/ALOX5"/>
</comment>
<organism>
    <name type="scientific">Homo sapiens</name>
    <name type="common">Human</name>
    <dbReference type="NCBI Taxonomy" id="9606"/>
    <lineage>
        <taxon>Eukaryota</taxon>
        <taxon>Metazoa</taxon>
        <taxon>Chordata</taxon>
        <taxon>Craniata</taxon>
        <taxon>Vertebrata</taxon>
        <taxon>Euteleostomi</taxon>
        <taxon>Mammalia</taxon>
        <taxon>Eutheria</taxon>
        <taxon>Euarchontoglires</taxon>
        <taxon>Primates</taxon>
        <taxon>Haplorrhini</taxon>
        <taxon>Catarrhini</taxon>
        <taxon>Hominidae</taxon>
        <taxon>Homo</taxon>
    </lineage>
</organism>
<gene>
    <name evidence="40" type="primary">ALOX5</name>
    <name type="synonym">LOG5</name>
</gene>
<evidence type="ECO:0000250" key="1"/>
<evidence type="ECO:0000250" key="2">
    <source>
        <dbReference type="UniProtKB" id="P48999"/>
    </source>
</evidence>
<evidence type="ECO:0000255" key="3">
    <source>
        <dbReference type="PROSITE-ProRule" id="PRU00152"/>
    </source>
</evidence>
<evidence type="ECO:0000255" key="4">
    <source>
        <dbReference type="PROSITE-ProRule" id="PRU00726"/>
    </source>
</evidence>
<evidence type="ECO:0000269" key="5">
    <source>
    </source>
</evidence>
<evidence type="ECO:0000269" key="6">
    <source>
    </source>
</evidence>
<evidence type="ECO:0000269" key="7">
    <source>
    </source>
</evidence>
<evidence type="ECO:0000269" key="8">
    <source>
    </source>
</evidence>
<evidence type="ECO:0000269" key="9">
    <source>
    </source>
</evidence>
<evidence type="ECO:0000269" key="10">
    <source>
    </source>
</evidence>
<evidence type="ECO:0000269" key="11">
    <source>
    </source>
</evidence>
<evidence type="ECO:0000269" key="12">
    <source>
    </source>
</evidence>
<evidence type="ECO:0000269" key="13">
    <source>
    </source>
</evidence>
<evidence type="ECO:0000269" key="14">
    <source>
    </source>
</evidence>
<evidence type="ECO:0000269" key="15">
    <source>
    </source>
</evidence>
<evidence type="ECO:0000269" key="16">
    <source>
    </source>
</evidence>
<evidence type="ECO:0000269" key="17">
    <source>
    </source>
</evidence>
<evidence type="ECO:0000269" key="18">
    <source>
    </source>
</evidence>
<evidence type="ECO:0000269" key="19">
    <source>
    </source>
</evidence>
<evidence type="ECO:0000269" key="20">
    <source>
    </source>
</evidence>
<evidence type="ECO:0000269" key="21">
    <source>
    </source>
</evidence>
<evidence type="ECO:0000269" key="22">
    <source>
    </source>
</evidence>
<evidence type="ECO:0000269" key="23">
    <source>
    </source>
</evidence>
<evidence type="ECO:0000269" key="24">
    <source>
    </source>
</evidence>
<evidence type="ECO:0000269" key="25">
    <source>
    </source>
</evidence>
<evidence type="ECO:0000269" key="26">
    <source>
    </source>
</evidence>
<evidence type="ECO:0000269" key="27">
    <source>
    </source>
</evidence>
<evidence type="ECO:0000269" key="28">
    <source>
    </source>
</evidence>
<evidence type="ECO:0000269" key="29">
    <source>
    </source>
</evidence>
<evidence type="ECO:0000303" key="30">
    <source>
    </source>
</evidence>
<evidence type="ECO:0000303" key="31">
    <source>
    </source>
</evidence>
<evidence type="ECO:0000303" key="32">
    <source>
    </source>
</evidence>
<evidence type="ECO:0000305" key="33"/>
<evidence type="ECO:0000305" key="34">
    <source>
    </source>
</evidence>
<evidence type="ECO:0000305" key="35">
    <source>
    </source>
</evidence>
<evidence type="ECO:0000305" key="36">
    <source>
    </source>
</evidence>
<evidence type="ECO:0000305" key="37">
    <source>
    </source>
</evidence>
<evidence type="ECO:0000305" key="38">
    <source>
    </source>
</evidence>
<evidence type="ECO:0000305" key="39">
    <source>
    </source>
</evidence>
<evidence type="ECO:0000312" key="40">
    <source>
        <dbReference type="HGNC" id="HGNC:435"/>
    </source>
</evidence>
<evidence type="ECO:0007744" key="41">
    <source>
        <dbReference type="PDB" id="3O8Y"/>
    </source>
</evidence>
<evidence type="ECO:0007744" key="42">
    <source>
        <dbReference type="PDB" id="3V92"/>
    </source>
</evidence>
<evidence type="ECO:0007744" key="43">
    <source>
        <dbReference type="PDB" id="3V98"/>
    </source>
</evidence>
<evidence type="ECO:0007744" key="44">
    <source>
        <dbReference type="PDB" id="3V99"/>
    </source>
</evidence>
<evidence type="ECO:0007829" key="45">
    <source>
        <dbReference type="PDB" id="3O8Y"/>
    </source>
</evidence>
<evidence type="ECO:0007829" key="46">
    <source>
        <dbReference type="PDB" id="3V98"/>
    </source>
</evidence>
<evidence type="ECO:0007829" key="47">
    <source>
        <dbReference type="PDB" id="3V99"/>
    </source>
</evidence>
<evidence type="ECO:0007829" key="48">
    <source>
        <dbReference type="PDB" id="6NCF"/>
    </source>
</evidence>
<evidence type="ECO:0007829" key="49">
    <source>
        <dbReference type="PDB" id="7TTJ"/>
    </source>
</evidence>
<evidence type="ECO:0007829" key="50">
    <source>
        <dbReference type="PDB" id="7TTK"/>
    </source>
</evidence>
<evidence type="ECO:0007829" key="51">
    <source>
        <dbReference type="PDB" id="7TTL"/>
    </source>
</evidence>
<accession>P09917</accession>
<accession>B7ZLS0</accession>
<accession>E5FPY5</accession>
<accession>E5FPY7</accession>
<accession>E5FPY8</accession>
<accession>Q5JQ14</accession>